<feature type="chain" id="PRO_0000109247" description="Peroxisomal bifunctional enzyme">
    <location>
        <begin position="1"/>
        <end position="723"/>
    </location>
</feature>
<feature type="region of interest" description="Enoyl-CoA hydratase / isomerase">
    <location>
        <begin position="1"/>
        <end position="282"/>
    </location>
</feature>
<feature type="region of interest" description="3-hydroxyacyl-CoA dehydrogenase">
    <location>
        <begin position="283"/>
        <end position="572"/>
    </location>
</feature>
<feature type="short sequence motif" description="Microbody targeting signal">
    <location>
        <begin position="721"/>
        <end position="723"/>
    </location>
</feature>
<feature type="binding site" evidence="1">
    <location>
        <position position="101"/>
    </location>
    <ligand>
        <name>substrate</name>
    </ligand>
</feature>
<feature type="site" description="Important for catalytic activity" evidence="1">
    <location>
        <position position="104"/>
    </location>
</feature>
<feature type="site" description="Important for catalytic activity" evidence="1">
    <location>
        <position position="124"/>
    </location>
</feature>
<feature type="modified residue" description="N6-succinyllysine" evidence="3">
    <location>
        <position position="38"/>
    </location>
</feature>
<feature type="modified residue" description="N6-acetyllysine; alternate" evidence="7">
    <location>
        <position position="165"/>
    </location>
</feature>
<feature type="modified residue" description="N6-succinyllysine; alternate" evidence="3">
    <location>
        <position position="165"/>
    </location>
</feature>
<feature type="modified residue" description="N6-acetyllysine" evidence="7">
    <location>
        <position position="171"/>
    </location>
</feature>
<feature type="modified residue" description="N6-acetyllysine; alternate" evidence="3">
    <location>
        <position position="219"/>
    </location>
</feature>
<feature type="modified residue" description="N6-succinyllysine; alternate" evidence="3">
    <location>
        <position position="219"/>
    </location>
</feature>
<feature type="modified residue" description="N6-acetyllysine" evidence="3">
    <location>
        <position position="250"/>
    </location>
</feature>
<feature type="modified residue" description="N6-succinyllysine" evidence="3">
    <location>
        <position position="280"/>
    </location>
</feature>
<feature type="modified residue" description="N6-succinyllysine" evidence="3">
    <location>
        <position position="290"/>
    </location>
</feature>
<feature type="modified residue" description="N6-acetyllysine" evidence="7">
    <location>
        <position position="346"/>
    </location>
</feature>
<feature type="modified residue" description="N6-acetyllysine" evidence="3">
    <location>
        <position position="350"/>
    </location>
</feature>
<feature type="modified residue" description="N6-acetyllysine" evidence="3">
    <location>
        <position position="464"/>
    </location>
</feature>
<feature type="modified residue" description="N6-succinyllysine" evidence="3">
    <location>
        <position position="532"/>
    </location>
</feature>
<feature type="modified residue" description="Phosphothreonine" evidence="17">
    <location>
        <position position="548"/>
    </location>
</feature>
<feature type="modified residue" description="N6-succinyllysine" evidence="3">
    <location>
        <position position="577"/>
    </location>
</feature>
<feature type="modified residue" description="N6-acetyllysine; alternate" evidence="7 15">
    <location>
        <position position="584"/>
    </location>
</feature>
<feature type="modified residue" description="N6-succinyllysine; alternate" evidence="3">
    <location>
        <position position="584"/>
    </location>
</feature>
<feature type="modified residue" description="N6-acetyllysine; alternate" evidence="3">
    <location>
        <position position="591"/>
    </location>
</feature>
<feature type="modified residue" description="N6-succinyllysine; alternate" evidence="3">
    <location>
        <position position="591"/>
    </location>
</feature>
<feature type="modified residue" description="N6-acetyllysine; alternate" evidence="3">
    <location>
        <position position="710"/>
    </location>
</feature>
<feature type="modified residue" description="N6-succinyllysine; alternate" evidence="3">
    <location>
        <position position="710"/>
    </location>
</feature>
<feature type="modified residue" description="Phosphoserine" evidence="16">
    <location>
        <position position="718"/>
    </location>
</feature>
<feature type="modified residue" description="N6-succinyllysine" evidence="3">
    <location>
        <position position="722"/>
    </location>
</feature>
<feature type="splice variant" id="VSP_042811" description="In isoform 2." evidence="10">
    <location>
        <begin position="1"/>
        <end position="96"/>
    </location>
</feature>
<feature type="sequence variant" id="VAR_070949" description="In FRTS3; the mutant is mistargeted to mitochondria; results in impaired mitochondrial oxidative phosphorylation and defects in the transport of fluids across the epithelium of renal proximal tubular cells; dbSNP:rs398124646." evidence="8">
    <original>E</original>
    <variation>K</variation>
    <location>
        <position position="3"/>
    </location>
</feature>
<feature type="sequence variant" id="VAR_054329" description="In dbSNP:rs1062551." evidence="9">
    <original>V</original>
    <variation>G</variation>
    <location>
        <position position="40"/>
    </location>
</feature>
<feature type="sequence variant" id="VAR_054330" description="In dbSNP:rs1062552." evidence="9">
    <original>I</original>
    <variation>R</variation>
    <location>
        <position position="41"/>
    </location>
</feature>
<feature type="sequence variant" id="VAR_047132" description="In dbSNP:rs1062553." evidence="9">
    <original>T</original>
    <variation>I</variation>
    <location>
        <position position="75"/>
    </location>
</feature>
<feature type="sequence variant" id="VAR_047133" description="In dbSNP:rs2302819." evidence="4">
    <original>A</original>
    <variation>T</variation>
    <location>
        <position position="274"/>
    </location>
</feature>
<feature type="sequence variant" id="VAR_054331" description="In dbSNP:rs1062555." evidence="9">
    <original>A</original>
    <variation>G</variation>
    <location>
        <position position="325"/>
    </location>
</feature>
<feature type="sequence variant" id="VAR_054332" description="In dbSNP:rs1042437." evidence="6 9">
    <original>K</original>
    <variation>T</variation>
    <location>
        <position position="598"/>
    </location>
</feature>
<feature type="sequence variant" id="VAR_047134" description="In dbSNP:rs1042438." evidence="6 9">
    <original>T</original>
    <variation>P</variation>
    <location>
        <position position="606"/>
    </location>
</feature>
<feature type="sequence variant" id="VAR_047135" description="In dbSNP:rs11919970.">
    <original>Q</original>
    <variation>K</variation>
    <location>
        <position position="685"/>
    </location>
</feature>
<feature type="sequence variant" id="VAR_047136" description="In dbSNP:rs11927618.">
    <original>L</original>
    <variation>S</variation>
    <location>
        <position position="715"/>
    </location>
</feature>
<feature type="mutagenesis site" description="Greatly reduced acetylation and insensitive to treatment with TSA and NAM; when associated with Q-171; Q-346 and Q-584." evidence="7">
    <original>K</original>
    <variation>Q</variation>
    <location>
        <position position="165"/>
    </location>
</feature>
<feature type="mutagenesis site" description="Greatly reduced acetylation and insensitive to treatment with TSA and NAM; when associated with Q-165; Q-346 and Q-584." evidence="7">
    <original>K</original>
    <variation>Q</variation>
    <location>
        <position position="171"/>
    </location>
</feature>
<feature type="mutagenesis site" description="Greatly reduced acetylation and insensitive to treatment with TSA and NAM; when associated with Q-165; Q-171 and Q-584." evidence="7">
    <original>K</original>
    <variation>Q</variation>
    <location>
        <position position="346"/>
    </location>
</feature>
<feature type="mutagenesis site" description="Greatly reduced acetylation and insensitive to treatment with TSA and NAM; when associated with Q-165; Q-171 and Q-346." evidence="7">
    <original>K</original>
    <variation>Q</variation>
    <location>
        <position position="584"/>
    </location>
</feature>
<feature type="sequence conflict" description="In Ref. 1; AAA53289." evidence="12" ref="1">
    <original>E</original>
    <variation>D</variation>
    <location>
        <position position="117"/>
    </location>
</feature>
<feature type="sequence conflict" description="In Ref. 1; AAA53289 and 7; AAB19482." evidence="12" ref="1 7">
    <original>WP</original>
    <variation>CA</variation>
    <location>
        <begin position="656"/>
        <end position="657"/>
    </location>
</feature>
<name>ECHP_HUMAN</name>
<comment type="function">
    <text evidence="2 3 5 13">Peroxisomal trifunctional enzyme possessing 2-enoyl-CoA hydratase, 3-hydroxyacyl-CoA dehydrogenase, and delta 3, delta 2-enoyl-CoA isomerase activities. Catalyzes two of the four reactions of the long chain fatty acids peroxisomal beta-oxidation pathway (By similarity). Can also use branched-chain fatty acids such as 2-methyl-2E-butenoyl-CoA as a substrate, which is hydrated into (2S,3S)-3-hydroxy-2-methylbutanoyl-CoA (By similarity). Optimal isomerase for 2,5 double bonds into 3,5 form isomerization in a range of enoyl-CoA species (Probable). Also able to isomerize both 3-cis and 3-trans double bonds into the 2-trans form in a range of enoyl-CoA species (By similarity). With HSD17B4, catalyzes the hydration of trans-2-enoyl-CoA and the dehydrogenation of 3-hydroxyacyl-CoA, but with opposite chiral specificity (PubMed:15060085). Regulates the amount of medium-chain dicarboxylic fatty acids which are essential regulators of all fatty acid oxidation pathways (By similarity). Also involved in the degradation of long-chain dicarboxylic acids through peroxisomal beta-oxidation (PubMed:15060085).</text>
</comment>
<comment type="catalytic activity">
    <reaction evidence="5">
        <text>a (3S)-3-hydroxyacyl-CoA = a (2E)-enoyl-CoA + H2O</text>
        <dbReference type="Rhea" id="RHEA:16105"/>
        <dbReference type="ChEBI" id="CHEBI:15377"/>
        <dbReference type="ChEBI" id="CHEBI:57318"/>
        <dbReference type="ChEBI" id="CHEBI:58856"/>
        <dbReference type="EC" id="4.2.1.17"/>
    </reaction>
    <physiologicalReaction direction="left-to-right" evidence="13">
        <dbReference type="Rhea" id="RHEA:16106"/>
    </physiologicalReaction>
</comment>
<comment type="catalytic activity">
    <reaction evidence="2">
        <text>a 4-saturated-(3S)-3-hydroxyacyl-CoA = a (3E)-enoyl-CoA + H2O</text>
        <dbReference type="Rhea" id="RHEA:20724"/>
        <dbReference type="ChEBI" id="CHEBI:15377"/>
        <dbReference type="ChEBI" id="CHEBI:58521"/>
        <dbReference type="ChEBI" id="CHEBI:137480"/>
        <dbReference type="EC" id="4.2.1.17"/>
    </reaction>
    <physiologicalReaction direction="left-to-right" evidence="2">
        <dbReference type="Rhea" id="RHEA:20725"/>
    </physiologicalReaction>
</comment>
<comment type="catalytic activity">
    <reaction evidence="2">
        <text>a (3Z)-enoyl-CoA = a 4-saturated (2E)-enoyl-CoA</text>
        <dbReference type="Rhea" id="RHEA:45900"/>
        <dbReference type="ChEBI" id="CHEBI:85097"/>
        <dbReference type="ChEBI" id="CHEBI:85489"/>
        <dbReference type="EC" id="5.3.3.8"/>
    </reaction>
    <physiologicalReaction direction="left-to-right" evidence="2">
        <dbReference type="Rhea" id="RHEA:45901"/>
    </physiologicalReaction>
</comment>
<comment type="catalytic activity">
    <reaction evidence="2">
        <text>a (3E)-enoyl-CoA = a 4-saturated (2E)-enoyl-CoA</text>
        <dbReference type="Rhea" id="RHEA:45228"/>
        <dbReference type="ChEBI" id="CHEBI:58521"/>
        <dbReference type="ChEBI" id="CHEBI:85097"/>
        <dbReference type="EC" id="5.3.3.8"/>
    </reaction>
    <physiologicalReaction direction="left-to-right" evidence="2">
        <dbReference type="Rhea" id="RHEA:45229"/>
    </physiologicalReaction>
</comment>
<comment type="catalytic activity">
    <reaction evidence="5">
        <text>a (3S)-3-hydroxyacyl-CoA + NAD(+) = a 3-oxoacyl-CoA + NADH + H(+)</text>
        <dbReference type="Rhea" id="RHEA:22432"/>
        <dbReference type="ChEBI" id="CHEBI:15378"/>
        <dbReference type="ChEBI" id="CHEBI:57318"/>
        <dbReference type="ChEBI" id="CHEBI:57540"/>
        <dbReference type="ChEBI" id="CHEBI:57945"/>
        <dbReference type="ChEBI" id="CHEBI:90726"/>
        <dbReference type="EC" id="1.1.1.35"/>
    </reaction>
    <physiologicalReaction direction="left-to-right" evidence="13">
        <dbReference type="Rhea" id="RHEA:22433"/>
    </physiologicalReaction>
</comment>
<comment type="catalytic activity">
    <reaction evidence="2">
        <text>(2S,3S)-3-hydroxy-2-methylbutanoyl-CoA = (2E)-2-methylbut-2-enoyl-CoA + H2O</text>
        <dbReference type="Rhea" id="RHEA:31119"/>
        <dbReference type="ChEBI" id="CHEBI:15377"/>
        <dbReference type="ChEBI" id="CHEBI:57312"/>
        <dbReference type="ChEBI" id="CHEBI:57337"/>
    </reaction>
    <physiologicalReaction direction="right-to-left" evidence="2">
        <dbReference type="Rhea" id="RHEA:31121"/>
    </physiologicalReaction>
</comment>
<comment type="catalytic activity">
    <reaction evidence="5">
        <text>(3S)-hydroxyhexadecanoyl-CoA + NAD(+) = 3-oxohexadecanoyl-CoA + NADH + H(+)</text>
        <dbReference type="Rhea" id="RHEA:31159"/>
        <dbReference type="ChEBI" id="CHEBI:15378"/>
        <dbReference type="ChEBI" id="CHEBI:57349"/>
        <dbReference type="ChEBI" id="CHEBI:57540"/>
        <dbReference type="ChEBI" id="CHEBI:57945"/>
        <dbReference type="ChEBI" id="CHEBI:62613"/>
    </reaction>
    <physiologicalReaction direction="left-to-right" evidence="5">
        <dbReference type="Rhea" id="RHEA:31160"/>
    </physiologicalReaction>
</comment>
<comment type="catalytic activity">
    <reaction evidence="5">
        <text>(3S)-hydroxyhexadecanoyl-CoA = (2E)-hexadecenoyl-CoA + H2O</text>
        <dbReference type="Rhea" id="RHEA:31163"/>
        <dbReference type="ChEBI" id="CHEBI:15377"/>
        <dbReference type="ChEBI" id="CHEBI:61526"/>
        <dbReference type="ChEBI" id="CHEBI:62613"/>
    </reaction>
    <physiologicalReaction direction="right-to-left" evidence="5">
        <dbReference type="Rhea" id="RHEA:31165"/>
    </physiologicalReaction>
</comment>
<comment type="catalytic activity">
    <reaction evidence="5">
        <text>(2E)-hexadecenedioyl-CoA + H2O = (3S)-hydroxyhexadecanedioyl-CoA</text>
        <dbReference type="Rhea" id="RHEA:40259"/>
        <dbReference type="ChEBI" id="CHEBI:15377"/>
        <dbReference type="ChEBI" id="CHEBI:77075"/>
        <dbReference type="ChEBI" id="CHEBI:77080"/>
    </reaction>
    <physiologicalReaction direction="left-to-right" evidence="5">
        <dbReference type="Rhea" id="RHEA:40260"/>
    </physiologicalReaction>
</comment>
<comment type="catalytic activity">
    <reaction evidence="5">
        <text>(3S)-hydroxyhexadecanedioyl-CoA + NAD(+) = 3-oxohexadecanedioyl-CoA + NADH + H(+)</text>
        <dbReference type="Rhea" id="RHEA:40267"/>
        <dbReference type="ChEBI" id="CHEBI:15378"/>
        <dbReference type="ChEBI" id="CHEBI:57540"/>
        <dbReference type="ChEBI" id="CHEBI:57945"/>
        <dbReference type="ChEBI" id="CHEBI:77080"/>
        <dbReference type="ChEBI" id="CHEBI:77081"/>
    </reaction>
    <physiologicalReaction direction="left-to-right" evidence="5">
        <dbReference type="Rhea" id="RHEA:40268"/>
    </physiologicalReaction>
</comment>
<comment type="catalytic activity">
    <reaction evidence="2">
        <text>(3E,5Z)-tetradecadienoyl-CoA = (2E,5Z)-tetradecadienoyl-CoA</text>
        <dbReference type="Rhea" id="RHEA:47464"/>
        <dbReference type="ChEBI" id="CHEBI:71586"/>
        <dbReference type="ChEBI" id="CHEBI:87701"/>
    </reaction>
    <physiologicalReaction direction="right-to-left" evidence="2">
        <dbReference type="Rhea" id="RHEA:47466"/>
    </physiologicalReaction>
</comment>
<comment type="catalytic activity">
    <reaction evidence="2">
        <text>(3E,5Z)-octadienoyl-CoA = (2E,5Z)-octadienoyl-CoA</text>
        <dbReference type="Rhea" id="RHEA:49932"/>
        <dbReference type="ChEBI" id="CHEBI:85108"/>
        <dbReference type="ChEBI" id="CHEBI:131990"/>
    </reaction>
    <physiologicalReaction direction="right-to-left" evidence="2">
        <dbReference type="Rhea" id="RHEA:49934"/>
    </physiologicalReaction>
</comment>
<comment type="catalytic activity">
    <reaction evidence="2">
        <text>(3S)-hydroxydecanoyl-CoA + NAD(+) = 3-oxodecanoyl-CoA + NADH + H(+)</text>
        <dbReference type="Rhea" id="RHEA:31187"/>
        <dbReference type="ChEBI" id="CHEBI:15378"/>
        <dbReference type="ChEBI" id="CHEBI:57540"/>
        <dbReference type="ChEBI" id="CHEBI:57945"/>
        <dbReference type="ChEBI" id="CHEBI:62548"/>
        <dbReference type="ChEBI" id="CHEBI:62616"/>
    </reaction>
    <physiologicalReaction direction="left-to-right" evidence="2">
        <dbReference type="Rhea" id="RHEA:31188"/>
    </physiologicalReaction>
</comment>
<comment type="catalytic activity">
    <reaction evidence="2">
        <text>(3E)-decenoyl-CoA = (2E)-decenoyl-CoA</text>
        <dbReference type="Rhea" id="RHEA:45752"/>
        <dbReference type="ChEBI" id="CHEBI:61406"/>
        <dbReference type="ChEBI" id="CHEBI:84793"/>
    </reaction>
    <physiologicalReaction direction="left-to-right" evidence="2">
        <dbReference type="Rhea" id="RHEA:45753"/>
    </physiologicalReaction>
</comment>
<comment type="catalytic activity">
    <reaction evidence="2">
        <text>(3Z)-hexenoyl-CoA = (2E)-hexenoyl-CoA</text>
        <dbReference type="Rhea" id="RHEA:45748"/>
        <dbReference type="ChEBI" id="CHEBI:62077"/>
        <dbReference type="ChEBI" id="CHEBI:85415"/>
    </reaction>
    <physiologicalReaction direction="left-to-right" evidence="2">
        <dbReference type="Rhea" id="RHEA:45749"/>
    </physiologicalReaction>
</comment>
<comment type="catalytic activity">
    <reaction evidence="2">
        <text>(3E)-hexenoyl-CoA = (2E)-hexenoyl-CoA</text>
        <dbReference type="Rhea" id="RHEA:45736"/>
        <dbReference type="ChEBI" id="CHEBI:62077"/>
        <dbReference type="ChEBI" id="CHEBI:84790"/>
    </reaction>
    <physiologicalReaction direction="left-to-right" evidence="2">
        <dbReference type="Rhea" id="RHEA:45737"/>
    </physiologicalReaction>
</comment>
<comment type="catalytic activity">
    <reaction evidence="2">
        <text>(3S)-hydroxydecanoyl-CoA = (2E)-decenoyl-CoA + H2O</text>
        <dbReference type="Rhea" id="RHEA:31191"/>
        <dbReference type="ChEBI" id="CHEBI:15377"/>
        <dbReference type="ChEBI" id="CHEBI:61406"/>
        <dbReference type="ChEBI" id="CHEBI:62616"/>
    </reaction>
    <physiologicalReaction direction="right-to-left" evidence="2">
        <dbReference type="Rhea" id="RHEA:31193"/>
    </physiologicalReaction>
</comment>
<comment type="catalytic activity">
    <reaction evidence="2">
        <text>(3S)-hydroxyhexanoyl-CoA = (2E)-hexenoyl-CoA + H2O</text>
        <dbReference type="Rhea" id="RHEA:30547"/>
        <dbReference type="ChEBI" id="CHEBI:15377"/>
        <dbReference type="ChEBI" id="CHEBI:62075"/>
        <dbReference type="ChEBI" id="CHEBI:62077"/>
    </reaction>
    <physiologicalReaction direction="right-to-left" evidence="2">
        <dbReference type="Rhea" id="RHEA:30549"/>
    </physiologicalReaction>
</comment>
<comment type="activity regulation">
    <text evidence="7">Enzyme activity enhanced by acetylation.</text>
</comment>
<comment type="biophysicochemical properties">
    <kinetics>
        <KM evidence="5">0.3 uM for (2E)-hexadecenedioyl-CoA</KM>
        <KM evidence="5">10.4 uM for (2E)-hexadecenoyl-CoA</KM>
    </kinetics>
</comment>
<comment type="pathway">
    <text evidence="5">Lipid metabolism; fatty acid beta-oxidation.</text>
</comment>
<comment type="subunit">
    <text evidence="2">Monomer.</text>
</comment>
<comment type="interaction">
    <interactant intactId="EBI-2339219">
        <id>Q08426</id>
    </interactant>
    <interactant intactId="EBI-308736">
        <id>Q5JTZ9</id>
        <label>AARS2</label>
    </interactant>
    <organismsDiffer>false</organismsDiffer>
    <experiments>3</experiments>
</comment>
<comment type="interaction">
    <interactant intactId="EBI-2339219">
        <id>Q08426</id>
    </interactant>
    <interactant intactId="EBI-353944">
        <id>P60709</id>
        <label>ACTB</label>
    </interactant>
    <organismsDiffer>false</organismsDiffer>
    <experiments>4</experiments>
</comment>
<comment type="interaction">
    <interactant intactId="EBI-2339219">
        <id>Q08426</id>
    </interactant>
    <interactant intactId="EBI-351292">
        <id>P63261</id>
        <label>ACTG1</label>
    </interactant>
    <organismsDiffer>false</organismsDiffer>
    <experiments>4</experiments>
</comment>
<comment type="interaction">
    <interactant intactId="EBI-2339219">
        <id>Q08426</id>
    </interactant>
    <interactant intactId="EBI-12002366">
        <id>P78563-4</id>
        <label>ADARB1</label>
    </interactant>
    <organismsDiffer>false</organismsDiffer>
    <experiments>3</experiments>
</comment>
<comment type="interaction">
    <interactant intactId="EBI-2339219">
        <id>Q08426</id>
    </interactant>
    <interactant intactId="EBI-12170453">
        <id>Q8N2N9-4</id>
        <label>ANKRD36B</label>
    </interactant>
    <organismsDiffer>false</organismsDiffer>
    <experiments>3</experiments>
</comment>
<comment type="interaction">
    <interactant intactId="EBI-2339219">
        <id>Q08426</id>
    </interactant>
    <interactant intactId="EBI-36513937">
        <id>Q5T9G4-2</id>
        <label>ARMC12</label>
    </interactant>
    <organismsDiffer>false</organismsDiffer>
    <experiments>3</experiments>
</comment>
<comment type="interaction">
    <interactant intactId="EBI-2339219">
        <id>Q08426</id>
    </interactant>
    <interactant intactId="EBI-717832">
        <id>Q9UH62</id>
        <label>ARMCX3</label>
    </interactant>
    <organismsDiffer>false</organismsDiffer>
    <experiments>3</experiments>
</comment>
<comment type="interaction">
    <interactant intactId="EBI-2339219">
        <id>Q08426</id>
    </interactant>
    <interactant intactId="EBI-711810">
        <id>O14503</id>
        <label>BHLHE40</label>
    </interactant>
    <organismsDiffer>false</organismsDiffer>
    <experiments>3</experiments>
</comment>
<comment type="interaction">
    <interactant intactId="EBI-2339219">
        <id>Q08426</id>
    </interactant>
    <interactant intactId="EBI-11983447">
        <id>Q8N9W6-4</id>
        <label>BOLL</label>
    </interactant>
    <organismsDiffer>false</organismsDiffer>
    <experiments>3</experiments>
</comment>
<comment type="interaction">
    <interactant intactId="EBI-2339219">
        <id>Q08426</id>
    </interactant>
    <interactant intactId="EBI-2874661">
        <id>Q9BV19</id>
        <label>C1orf50</label>
    </interactant>
    <organismsDiffer>false</organismsDiffer>
    <experiments>3</experiments>
</comment>
<comment type="interaction">
    <interactant intactId="EBI-2339219">
        <id>Q08426</id>
    </interactant>
    <interactant intactId="EBI-11532021">
        <id>P20807-4</id>
        <label>CAPN3</label>
    </interactant>
    <organismsDiffer>false</organismsDiffer>
    <experiments>3</experiments>
</comment>
<comment type="interaction">
    <interactant intactId="EBI-2339219">
        <id>Q08426</id>
    </interactant>
    <interactant intactId="EBI-740135">
        <id>P35520</id>
        <label>CBS</label>
    </interactant>
    <organismsDiffer>false</organismsDiffer>
    <experiments>4</experiments>
</comment>
<comment type="interaction">
    <interactant intactId="EBI-2339219">
        <id>Q08426</id>
    </interactant>
    <interactant intactId="EBI-10171570">
        <id>Q68D86</id>
        <label>CCDC102B</label>
    </interactant>
    <organismsDiffer>false</organismsDiffer>
    <experiments>4</experiments>
</comment>
<comment type="interaction">
    <interactant intactId="EBI-2339219">
        <id>Q08426</id>
    </interactant>
    <interactant intactId="EBI-10961312">
        <id>Q8IYE1</id>
        <label>CCDC13</label>
    </interactant>
    <organismsDiffer>false</organismsDiffer>
    <experiments>3</experiments>
</comment>
<comment type="interaction">
    <interactant intactId="EBI-2339219">
        <id>Q08426</id>
    </interactant>
    <interactant intactId="EBI-11063830">
        <id>Q86X02</id>
        <label>CDR2L</label>
    </interactant>
    <organismsDiffer>false</organismsDiffer>
    <experiments>3</experiments>
</comment>
<comment type="interaction">
    <interactant intactId="EBI-2339219">
        <id>Q08426</id>
    </interactant>
    <interactant intactId="EBI-11123098">
        <id>Q9Y592-2</id>
        <label>CEP83</label>
    </interactant>
    <organismsDiffer>false</organismsDiffer>
    <experiments>3</experiments>
</comment>
<comment type="interaction">
    <interactant intactId="EBI-2339219">
        <id>Q08426</id>
    </interactant>
    <interactant intactId="EBI-351218">
        <id>Q9Y281</id>
        <label>CFL2</label>
    </interactant>
    <organismsDiffer>false</organismsDiffer>
    <experiments>3</experiments>
</comment>
<comment type="interaction">
    <interactant intactId="EBI-2339219">
        <id>Q08426</id>
    </interactant>
    <interactant intactId="EBI-1045797">
        <id>Q8N5K1</id>
        <label>CISD2</label>
    </interactant>
    <organismsDiffer>false</organismsDiffer>
    <experiments>3</experiments>
</comment>
<comment type="interaction">
    <interactant intactId="EBI-2339219">
        <id>Q08426</id>
    </interactant>
    <interactant intactId="EBI-16354902">
        <id>P56856</id>
        <label>CLDN18</label>
    </interactant>
    <organismsDiffer>false</organismsDiffer>
    <experiments>3</experiments>
</comment>
<comment type="interaction">
    <interactant intactId="EBI-2339219">
        <id>Q08426</id>
    </interactant>
    <interactant intactId="EBI-18400628">
        <id>O00501</id>
        <label>CLDN5</label>
    </interactant>
    <organismsDiffer>false</organismsDiffer>
    <experiments>3</experiments>
</comment>
<comment type="interaction">
    <interactant intactId="EBI-2339219">
        <id>Q08426</id>
    </interactant>
    <interactant intactId="EBI-750020">
        <id>P49760</id>
        <label>CLK2</label>
    </interactant>
    <organismsDiffer>false</organismsDiffer>
    <experiments>3</experiments>
</comment>
<comment type="interaction">
    <interactant intactId="EBI-2339219">
        <id>Q08426</id>
    </interactant>
    <interactant intactId="EBI-1054315">
        <id>Q9NX76</id>
        <label>CMTM6</label>
    </interactant>
    <organismsDiffer>false</organismsDiffer>
    <experiments>3</experiments>
</comment>
<comment type="interaction">
    <interactant intactId="EBI-2339219">
        <id>Q08426</id>
    </interactant>
    <interactant intactId="EBI-724524">
        <id>O75208</id>
        <label>COQ9</label>
    </interactant>
    <organismsDiffer>false</organismsDiffer>
    <experiments>3</experiments>
</comment>
<comment type="interaction">
    <interactant intactId="EBI-2339219">
        <id>Q08426</id>
    </interactant>
    <interactant intactId="EBI-8646596">
        <id>P49447</id>
        <label>CYB561</label>
    </interactant>
    <organismsDiffer>false</organismsDiffer>
    <experiments>3</experiments>
</comment>
<comment type="interaction">
    <interactant intactId="EBI-2339219">
        <id>Q08426</id>
    </interactant>
    <interactant intactId="EBI-10269179">
        <id>Q8NBI2</id>
        <label>CYB561A3</label>
    </interactant>
    <organismsDiffer>false</organismsDiffer>
    <experiments>3</experiments>
</comment>
<comment type="interaction">
    <interactant intactId="EBI-2339219">
        <id>Q08426</id>
    </interactant>
    <interactant intactId="EBI-12831318">
        <id>Q96Q80</id>
        <label>DERL3</label>
    </interactant>
    <organismsDiffer>false</organismsDiffer>
    <experiments>3</experiments>
</comment>
<comment type="interaction">
    <interactant intactId="EBI-2339219">
        <id>Q08426</id>
    </interactant>
    <interactant intactId="EBI-1055572">
        <id>P17661</id>
        <label>DES</label>
    </interactant>
    <organismsDiffer>false</organismsDiffer>
    <experiments>6</experiments>
</comment>
<comment type="interaction">
    <interactant intactId="EBI-2339219">
        <id>Q08426</id>
    </interactant>
    <interactant intactId="EBI-517508">
        <id>Q9NR28</id>
        <label>DIABLO</label>
    </interactant>
    <organismsDiffer>false</organismsDiffer>
    <experiments>3</experiments>
</comment>
<comment type="interaction">
    <interactant intactId="EBI-2339219">
        <id>Q08426</id>
    </interactant>
    <interactant intactId="EBI-3915253">
        <id>Q15125</id>
        <label>EBP</label>
    </interactant>
    <organismsDiffer>false</organismsDiffer>
    <experiments>3</experiments>
</comment>
<comment type="interaction">
    <interactant intactId="EBI-2339219">
        <id>Q08426</id>
    </interactant>
    <interactant intactId="EBI-4319440">
        <id>P54849</id>
        <label>EMP1</label>
    </interactant>
    <organismsDiffer>false</organismsDiffer>
    <experiments>3</experiments>
</comment>
<comment type="interaction">
    <interactant intactId="EBI-2339219">
        <id>Q08426</id>
    </interactant>
    <interactant intactId="EBI-781527">
        <id>Q969X5</id>
        <label>ERGIC1</label>
    </interactant>
    <organismsDiffer>false</organismsDiffer>
    <experiments>3</experiments>
</comment>
<comment type="interaction">
    <interactant intactId="EBI-2339219">
        <id>Q08426</id>
    </interactant>
    <interactant intactId="EBI-781551">
        <id>Q9Y282</id>
        <label>ERGIC3</label>
    </interactant>
    <organismsDiffer>false</organismsDiffer>
    <experiments>3</experiments>
</comment>
<comment type="interaction">
    <interactant intactId="EBI-2339219">
        <id>Q08426</id>
    </interactant>
    <interactant intactId="EBI-17973325">
        <id>P60508</id>
        <label>ERVFRD-1</label>
    </interactant>
    <organismsDiffer>false</organismsDiffer>
    <experiments>3</experiments>
</comment>
<comment type="interaction">
    <interactant intactId="EBI-2339219">
        <id>Q08426</id>
    </interactant>
    <interactant intactId="EBI-12836320">
        <id>Q92915-2</id>
        <label>FGF14</label>
    </interactant>
    <organismsDiffer>false</organismsDiffer>
    <experiments>3</experiments>
</comment>
<comment type="interaction">
    <interactant intactId="EBI-2339219">
        <id>Q08426</id>
    </interactant>
    <interactant intactId="EBI-3059266">
        <id>Q8IVP5</id>
        <label>FUNDC1</label>
    </interactant>
    <organismsDiffer>false</organismsDiffer>
    <experiments>4</experiments>
</comment>
<comment type="interaction">
    <interactant intactId="EBI-2339219">
        <id>Q08426</id>
    </interactant>
    <interactant intactId="EBI-1052570">
        <id>O95995</id>
        <label>GAS8</label>
    </interactant>
    <organismsDiffer>false</organismsDiffer>
    <experiments>3</experiments>
</comment>
<comment type="interaction">
    <interactant intactId="EBI-2339219">
        <id>Q08426</id>
    </interactant>
    <interactant intactId="EBI-2548508">
        <id>Q96IK5</id>
        <label>GMCL1</label>
    </interactant>
    <organismsDiffer>false</organismsDiffer>
    <experiments>3</experiments>
</comment>
<comment type="interaction">
    <interactant intactId="EBI-2339219">
        <id>Q08426</id>
    </interactant>
    <interactant intactId="EBI-717919">
        <id>Q4V328</id>
        <label>GRIPAP1</label>
    </interactant>
    <organismsDiffer>false</organismsDiffer>
    <experiments>3</experiments>
</comment>
<comment type="interaction">
    <interactant intactId="EBI-2339219">
        <id>Q08426</id>
    </interactant>
    <interactant intactId="EBI-743438">
        <id>Q8IV36</id>
        <label>HID1</label>
    </interactant>
    <organismsDiffer>false</organismsDiffer>
    <experiments>3</experiments>
</comment>
<comment type="interaction">
    <interactant intactId="EBI-2339219">
        <id>Q08426</id>
    </interactant>
    <interactant intactId="EBI-473886">
        <id>O00291</id>
        <label>HIP1</label>
    </interactant>
    <organismsDiffer>false</organismsDiffer>
    <experiments>3</experiments>
</comment>
<comment type="interaction">
    <interactant intactId="EBI-2339219">
        <id>Q08426</id>
    </interactant>
    <interactant intactId="EBI-740641">
        <id>Q9NP66</id>
        <label>HMG20A</label>
    </interactant>
    <organismsDiffer>false</organismsDiffer>
    <experiments>3</experiments>
</comment>
<comment type="interaction">
    <interactant intactId="EBI-2339219">
        <id>Q08426</id>
    </interactant>
    <interactant intactId="EBI-1052304">
        <id>Q8NBQ5</id>
        <label>HSD17B11</label>
    </interactant>
    <organismsDiffer>false</organismsDiffer>
    <experiments>3</experiments>
</comment>
<comment type="interaction">
    <interactant intactId="EBI-2339219">
        <id>Q08426</id>
    </interactant>
    <interactant intactId="EBI-12937691">
        <id>Q9BUP3-3</id>
        <label>HTATIP2</label>
    </interactant>
    <organismsDiffer>false</organismsDiffer>
    <experiments>3</experiments>
</comment>
<comment type="interaction">
    <interactant intactId="EBI-2339219">
        <id>Q08426</id>
    </interactant>
    <interactant intactId="EBI-747204">
        <id>Q9UKT9</id>
        <label>IKZF3</label>
    </interactant>
    <organismsDiffer>false</organismsDiffer>
    <experiments>3</experiments>
</comment>
<comment type="interaction">
    <interactant intactId="EBI-2339219">
        <id>Q08426</id>
    </interactant>
    <interactant intactId="EBI-10266796">
        <id>Q8N5M9</id>
        <label>JAGN1</label>
    </interactant>
    <organismsDiffer>false</organismsDiffer>
    <experiments>3</experiments>
</comment>
<comment type="interaction">
    <interactant intactId="EBI-2339219">
        <id>Q08426</id>
    </interactant>
    <interactant intactId="EBI-2511344">
        <id>Q8NC69</id>
        <label>KCTD6</label>
    </interactant>
    <organismsDiffer>false</organismsDiffer>
    <experiments>6</experiments>
</comment>
<comment type="interaction">
    <interactant intactId="EBI-2339219">
        <id>Q08426</id>
    </interactant>
    <interactant intactId="EBI-4397613">
        <id>Q7L273</id>
        <label>KCTD9</label>
    </interactant>
    <organismsDiffer>false</organismsDiffer>
    <experiments>4</experiments>
</comment>
<comment type="interaction">
    <interactant intactId="EBI-2339219">
        <id>Q08426</id>
    </interactant>
    <interactant intactId="EBI-10172290">
        <id>P60409</id>
        <label>KRTAP10-7</label>
    </interactant>
    <organismsDiffer>false</organismsDiffer>
    <experiments>3</experiments>
</comment>
<comment type="interaction">
    <interactant intactId="EBI-2339219">
        <id>Q08426</id>
    </interactant>
    <interactant intactId="EBI-10302392">
        <id>Q9BYQ6</id>
        <label>KRTAP4-11</label>
    </interactant>
    <organismsDiffer>false</organismsDiffer>
    <experiments>3</experiments>
</comment>
<comment type="interaction">
    <interactant intactId="EBI-2339219">
        <id>Q08426</id>
    </interactant>
    <interactant intactId="EBI-11911016">
        <id>P80188</id>
        <label>LCN2</label>
    </interactant>
    <organismsDiffer>false</organismsDiffer>
    <experiments>3</experiments>
</comment>
<comment type="interaction">
    <interactant intactId="EBI-2339219">
        <id>Q08426</id>
    </interactant>
    <interactant intactId="EBI-750776">
        <id>O95214</id>
        <label>LEPROTL1</label>
    </interactant>
    <organismsDiffer>false</organismsDiffer>
    <experiments>5</experiments>
</comment>
<comment type="interaction">
    <interactant intactId="EBI-2339219">
        <id>Q08426</id>
    </interactant>
    <interactant intactId="EBI-3509981">
        <id>P36941</id>
        <label>LTBR</label>
    </interactant>
    <organismsDiffer>false</organismsDiffer>
    <experiments>3</experiments>
</comment>
<comment type="interaction">
    <interactant intactId="EBI-2339219">
        <id>Q08426</id>
    </interactant>
    <interactant intactId="EBI-17200970">
        <id>Q6UWN5</id>
        <label>LYPD5</label>
    </interactant>
    <organismsDiffer>false</organismsDiffer>
    <experiments>3</experiments>
</comment>
<comment type="interaction">
    <interactant intactId="EBI-2339219">
        <id>Q08426</id>
    </interactant>
    <interactant intactId="EBI-2824799">
        <id>Q9NQ48</id>
        <label>LZTFL1</label>
    </interactant>
    <organismsDiffer>false</organismsDiffer>
    <experiments>3</experiments>
</comment>
<comment type="interaction">
    <interactant intactId="EBI-2339219">
        <id>Q08426</id>
    </interactant>
    <interactant intactId="EBI-741037">
        <id>Q9BRK4</id>
        <label>LZTS2</label>
    </interactant>
    <organismsDiffer>false</organismsDiffer>
    <experiments>3</experiments>
</comment>
<comment type="interaction">
    <interactant intactId="EBI-2339219">
        <id>Q08426</id>
    </interactant>
    <interactant intactId="EBI-10268010">
        <id>Q8N8X9</id>
        <label>MAB21L3</label>
    </interactant>
    <organismsDiffer>false</organismsDiffer>
    <experiments>3</experiments>
</comment>
<comment type="interaction">
    <interactant intactId="EBI-2339219">
        <id>Q08426</id>
    </interactant>
    <interactant intactId="EBI-2340316">
        <id>O15344</id>
        <label>MID1</label>
    </interactant>
    <organismsDiffer>false</organismsDiffer>
    <experiments>8</experiments>
</comment>
<comment type="interaction">
    <interactant intactId="EBI-2339219">
        <id>Q08426</id>
    </interactant>
    <interactant intactId="EBI-11522433">
        <id>Q5JR59-3</id>
        <label>MTUS2</label>
    </interactant>
    <organismsDiffer>false</organismsDiffer>
    <experiments>3</experiments>
</comment>
<comment type="interaction">
    <interactant intactId="EBI-2339219">
        <id>Q08426</id>
    </interactant>
    <interactant intactId="EBI-7950997">
        <id>Q96RE7</id>
        <label>NACC1</label>
    </interactant>
    <organismsDiffer>false</organismsDiffer>
    <experiments>3</experiments>
</comment>
<comment type="interaction">
    <interactant intactId="EBI-2339219">
        <id>Q08426</id>
    </interactant>
    <interactant intactId="EBI-10172876">
        <id>Q7Z6G3-2</id>
        <label>NECAB2</label>
    </interactant>
    <organismsDiffer>false</organismsDiffer>
    <experiments>3</experiments>
</comment>
<comment type="interaction">
    <interactant intactId="EBI-2339219">
        <id>Q08426</id>
    </interactant>
    <interactant intactId="EBI-12807478">
        <id>P35372-10</id>
        <label>OPRM1</label>
    </interactant>
    <organismsDiffer>false</organismsDiffer>
    <experiments>3</experiments>
</comment>
<comment type="interaction">
    <interactant intactId="EBI-2339219">
        <id>Q08426</id>
    </interactant>
    <interactant intactId="EBI-1054848">
        <id>Q9P0S3</id>
        <label>ORMDL1</label>
    </interactant>
    <organismsDiffer>false</organismsDiffer>
    <experiments>3</experiments>
</comment>
<comment type="interaction">
    <interactant intactId="EBI-2339219">
        <id>Q08426</id>
    </interactant>
    <interactant intactId="EBI-12847818">
        <id>Q8TEZ7</id>
        <label>PAQR8</label>
    </interactant>
    <organismsDiffer>false</organismsDiffer>
    <experiments>3</experiments>
</comment>
<comment type="interaction">
    <interactant intactId="EBI-2339219">
        <id>Q08426</id>
    </interactant>
    <interactant intactId="EBI-79165">
        <id>Q9NRD5</id>
        <label>PICK1</label>
    </interactant>
    <organismsDiffer>false</organismsDiffer>
    <experiments>3</experiments>
</comment>
<comment type="interaction">
    <interactant intactId="EBI-2339219">
        <id>Q08426</id>
    </interactant>
    <interactant intactId="EBI-302345">
        <id>Q8ND90</id>
        <label>PNMA1</label>
    </interactant>
    <organismsDiffer>false</organismsDiffer>
    <experiments>3</experiments>
</comment>
<comment type="interaction">
    <interactant intactId="EBI-2339219">
        <id>Q08426</id>
    </interactant>
    <interactant intactId="EBI-10171633">
        <id>Q96PV4</id>
        <label>PNMA5</label>
    </interactant>
    <organismsDiffer>false</organismsDiffer>
    <experiments>3</experiments>
</comment>
<comment type="interaction">
    <interactant intactId="EBI-2339219">
        <id>Q08426</id>
    </interactant>
    <interactant intactId="EBI-721802">
        <id>Q9BZL4</id>
        <label>PPP1R12C</label>
    </interactant>
    <organismsDiffer>false</organismsDiffer>
    <experiments>3</experiments>
</comment>
<comment type="interaction">
    <interactant intactId="EBI-2339219">
        <id>Q08426</id>
    </interactant>
    <interactant intactId="EBI-713955">
        <id>O75569</id>
        <label>PRKRA</label>
    </interactant>
    <organismsDiffer>false</organismsDiffer>
    <experiments>3</experiments>
</comment>
<comment type="interaction">
    <interactant intactId="EBI-2339219">
        <id>Q08426</id>
    </interactant>
    <interactant intactId="EBI-351098">
        <id>O14744</id>
        <label>PRMT5</label>
    </interactant>
    <organismsDiffer>false</organismsDiffer>
    <experiments>3</experiments>
</comment>
<comment type="interaction">
    <interactant intactId="EBI-2339219">
        <id>Q08426</id>
    </interactant>
    <interactant intactId="EBI-9978131">
        <id>Q1KLZ0</id>
        <label>PS1TP5BP1</label>
    </interactant>
    <organismsDiffer>false</organismsDiffer>
    <experiments>3</experiments>
</comment>
<comment type="interaction">
    <interactant intactId="EBI-2339219">
        <id>Q08426</id>
    </interactant>
    <interactant intactId="EBI-1050964">
        <id>O43586</id>
        <label>PSTPIP1</label>
    </interactant>
    <organismsDiffer>false</organismsDiffer>
    <experiments>3</experiments>
</comment>
<comment type="interaction">
    <interactant intactId="EBI-2339219">
        <id>Q08426</id>
    </interactant>
    <interactant intactId="EBI-11161398">
        <id>O14684</id>
        <label>PTGES</label>
    </interactant>
    <organismsDiffer>false</organismsDiffer>
    <experiments>3</experiments>
</comment>
<comment type="interaction">
    <interactant intactId="EBI-2339219">
        <id>Q08426</id>
    </interactant>
    <interactant intactId="EBI-14065960">
        <id>Q96HR9-2</id>
        <label>REEP6</label>
    </interactant>
    <organismsDiffer>false</organismsDiffer>
    <experiments>3</experiments>
</comment>
<comment type="interaction">
    <interactant intactId="EBI-2339219">
        <id>Q08426</id>
    </interactant>
    <interactant intactId="EBI-10829018">
        <id>Q04864-2</id>
        <label>REL</label>
    </interactant>
    <organismsDiffer>false</organismsDiffer>
    <experiments>3</experiments>
</comment>
<comment type="interaction">
    <interactant intactId="EBI-2339219">
        <id>Q08426</id>
    </interactant>
    <interactant intactId="EBI-2340927">
        <id>P78317</id>
        <label>RNF4</label>
    </interactant>
    <organismsDiffer>false</organismsDiffer>
    <experiments>3</experiments>
</comment>
<comment type="interaction">
    <interactant intactId="EBI-2339219">
        <id>Q08426</id>
    </interactant>
    <interactant intactId="EBI-1052363">
        <id>Q9NS64</id>
        <label>RPRM</label>
    </interactant>
    <organismsDiffer>false</organismsDiffer>
    <experiments>3</experiments>
</comment>
<comment type="interaction">
    <interactant intactId="EBI-2339219">
        <id>Q08426</id>
    </interactant>
    <interactant intactId="EBI-8636004">
        <id>Q96GQ5</id>
        <label>RUSF1</label>
    </interactant>
    <organismsDiffer>false</organismsDiffer>
    <experiments>3</experiments>
</comment>
<comment type="interaction">
    <interactant intactId="EBI-2339219">
        <id>Q08426</id>
    </interactant>
    <interactant intactId="EBI-12823227">
        <id>Q6ZMJ2-2</id>
        <label>SCARA5</label>
    </interactant>
    <organismsDiffer>false</organismsDiffer>
    <experiments>3</experiments>
</comment>
<comment type="interaction">
    <interactant intactId="EBI-2339219">
        <id>Q08426</id>
    </interactant>
    <interactant intactId="EBI-3923480">
        <id>Q8N3Y7</id>
        <label>SDR16C5</label>
    </interactant>
    <organismsDiffer>false</organismsDiffer>
    <experiments>3</experiments>
</comment>
<comment type="interaction">
    <interactant intactId="EBI-2339219">
        <id>Q08426</id>
    </interactant>
    <interactant intactId="EBI-2854842">
        <id>Q8WV19</id>
        <label>SFT2D1</label>
    </interactant>
    <organismsDiffer>false</organismsDiffer>
    <experiments>3</experiments>
</comment>
<comment type="interaction">
    <interactant intactId="EBI-2339219">
        <id>Q08426</id>
    </interactant>
    <interactant intactId="EBI-5663627">
        <id>Q16585</id>
        <label>SGCB</label>
    </interactant>
    <organismsDiffer>false</organismsDiffer>
    <experiments>3</experiments>
</comment>
<comment type="interaction">
    <interactant intactId="EBI-2339219">
        <id>Q08426</id>
    </interactant>
    <interactant intactId="EBI-1573290">
        <id>Q15849</id>
        <label>SLC14A2</label>
    </interactant>
    <organismsDiffer>false</organismsDiffer>
    <experiments>3</experiments>
</comment>
<comment type="interaction">
    <interactant intactId="EBI-2339219">
        <id>Q08426</id>
    </interactant>
    <interactant intactId="EBI-12898013">
        <id>Q9NP94</id>
        <label>SLC39A2</label>
    </interactant>
    <organismsDiffer>false</organismsDiffer>
    <experiments>3</experiments>
</comment>
<comment type="interaction">
    <interactant intactId="EBI-2339219">
        <id>Q08426</id>
    </interactant>
    <interactant intactId="EBI-12334905">
        <id>Q71RC9</id>
        <label>SMIM5</label>
    </interactant>
    <organismsDiffer>false</organismsDiffer>
    <experiments>3</experiments>
</comment>
<comment type="interaction">
    <interactant intactId="EBI-2339219">
        <id>Q08426</id>
    </interactant>
    <interactant intactId="EBI-395421">
        <id>Q16637</id>
        <label>SMN2</label>
    </interactant>
    <organismsDiffer>false</organismsDiffer>
    <experiments>3</experiments>
</comment>
<comment type="interaction">
    <interactant intactId="EBI-2339219">
        <id>Q08426</id>
    </interactant>
    <interactant intactId="EBI-17280858">
        <id>Q8WWF3</id>
        <label>SSMEM1</label>
    </interactant>
    <organismsDiffer>false</organismsDiffer>
    <experiments>3</experiments>
</comment>
<comment type="interaction">
    <interactant intactId="EBI-2339219">
        <id>Q08426</id>
    </interactant>
    <interactant intactId="EBI-2515299">
        <id>O43805</id>
        <label>SSNA1</label>
    </interactant>
    <organismsDiffer>false</organismsDiffer>
    <experiments>4</experiments>
</comment>
<comment type="interaction">
    <interactant intactId="EBI-2339219">
        <id>Q08426</id>
    </interactant>
    <interactant intactId="EBI-2212028">
        <id>Q9Y2D8</id>
        <label>SSX2IP</label>
    </interactant>
    <organismsDiffer>false</organismsDiffer>
    <experiments>3</experiments>
</comment>
<comment type="interaction">
    <interactant intactId="EBI-2339219">
        <id>Q08426</id>
    </interactant>
    <interactant intactId="EBI-12187159">
        <id>O43759-2</id>
        <label>SYNGR1</label>
    </interactant>
    <organismsDiffer>false</organismsDiffer>
    <experiments>3</experiments>
</comment>
<comment type="interaction">
    <interactant intactId="EBI-2339219">
        <id>Q08426</id>
    </interactant>
    <interactant intactId="EBI-11321949">
        <id>O43761</id>
        <label>SYNGR3</label>
    </interactant>
    <organismsDiffer>false</organismsDiffer>
    <experiments>3</experiments>
</comment>
<comment type="interaction">
    <interactant intactId="EBI-2339219">
        <id>Q08426</id>
    </interactant>
    <interactant intactId="EBI-12155101">
        <id>Q9BTD3</id>
        <label>TMEM121</label>
    </interactant>
    <organismsDiffer>false</organismsDiffer>
    <experiments>3</experiments>
</comment>
<comment type="interaction">
    <interactant intactId="EBI-2339219">
        <id>Q08426</id>
    </interactant>
    <interactant intactId="EBI-11343485">
        <id>Q86X19</id>
        <label>TMEM17</label>
    </interactant>
    <organismsDiffer>false</organismsDiffer>
    <experiments>3</experiments>
</comment>
<comment type="interaction">
    <interactant intactId="EBI-2339219">
        <id>Q08426</id>
    </interactant>
    <interactant intactId="EBI-11722971">
        <id>Q53FP2</id>
        <label>TMEM35A</label>
    </interactant>
    <organismsDiffer>false</organismsDiffer>
    <experiments>3</experiments>
</comment>
<comment type="interaction">
    <interactant intactId="EBI-2339219">
        <id>Q08426</id>
    </interactant>
    <interactant intactId="EBI-357849">
        <id>Q15025</id>
        <label>TNIP1</label>
    </interactant>
    <organismsDiffer>false</organismsDiffer>
    <experiments>4</experiments>
</comment>
<comment type="interaction">
    <interactant intactId="EBI-2339219">
        <id>Q08426</id>
    </interactant>
    <interactant intactId="EBI-1044672">
        <id>P29144</id>
        <label>TPP2</label>
    </interactant>
    <organismsDiffer>false</organismsDiffer>
    <experiments>5</experiments>
</comment>
<comment type="interaction">
    <interactant intactId="EBI-2339219">
        <id>Q08426</id>
    </interactant>
    <interactant intactId="EBI-359224">
        <id>Q13077</id>
        <label>TRAF1</label>
    </interactant>
    <organismsDiffer>false</organismsDiffer>
    <experiments>3</experiments>
</comment>
<comment type="interaction">
    <interactant intactId="EBI-2339219">
        <id>Q08426</id>
    </interactant>
    <interactant intactId="EBI-355744">
        <id>Q12933</id>
        <label>TRAF2</label>
    </interactant>
    <organismsDiffer>false</organismsDiffer>
    <experiments>3</experiments>
</comment>
<comment type="interaction">
    <interactant intactId="EBI-2339219">
        <id>Q08426</id>
    </interactant>
    <interactant intactId="EBI-81290">
        <id>P19474</id>
        <label>TRIM21</label>
    </interactant>
    <organismsDiffer>false</organismsDiffer>
    <experiments>3</experiments>
</comment>
<comment type="interaction">
    <interactant intactId="EBI-2339219">
        <id>Q08426</id>
    </interactant>
    <interactant intactId="EBI-740098">
        <id>P36406</id>
        <label>TRIM23</label>
    </interactant>
    <organismsDiffer>false</organismsDiffer>
    <experiments>3</experiments>
</comment>
<comment type="interaction">
    <interactant intactId="EBI-2339219">
        <id>Q08426</id>
    </interactant>
    <interactant intactId="EBI-719493">
        <id>P14373</id>
        <label>TRIM27</label>
    </interactant>
    <organismsDiffer>false</organismsDiffer>
    <experiments>6</experiments>
</comment>
<comment type="interaction">
    <interactant intactId="EBI-2339219">
        <id>Q08426</id>
    </interactant>
    <interactant intactId="EBI-725997">
        <id>Q8WV44</id>
        <label>TRIM41</label>
    </interactant>
    <organismsDiffer>false</organismsDiffer>
    <experiments>8</experiments>
</comment>
<comment type="interaction">
    <interactant intactId="EBI-2339219">
        <id>Q08426</id>
    </interactant>
    <interactant intactId="EBI-12840050">
        <id>Q9C035-3</id>
        <label>TRIM5</label>
    </interactant>
    <organismsDiffer>false</organismsDiffer>
    <experiments>3</experiments>
</comment>
<comment type="interaction">
    <interactant intactId="EBI-2339219">
        <id>Q08426</id>
    </interactant>
    <interactant intactId="EBI-2130429">
        <id>Q9BYV2</id>
        <label>TRIM54</label>
    </interactant>
    <organismsDiffer>false</organismsDiffer>
    <experiments>3</experiments>
</comment>
<comment type="interaction">
    <interactant intactId="EBI-2339219">
        <id>Q08426</id>
    </interactant>
    <interactant intactId="EBI-5661333">
        <id>Q969Q1</id>
        <label>TRIM63</label>
    </interactant>
    <organismsDiffer>false</organismsDiffer>
    <experiments>3</experiments>
</comment>
<comment type="interaction">
    <interactant intactId="EBI-2339219">
        <id>Q08426</id>
    </interactant>
    <interactant intactId="EBI-11530712">
        <id>Q04323-2</id>
        <label>UBXN1</label>
    </interactant>
    <organismsDiffer>false</organismsDiffer>
    <experiments>3</experiments>
</comment>
<comment type="interaction">
    <interactant intactId="EBI-2339219">
        <id>Q08426</id>
    </interactant>
    <interactant intactId="EBI-2107455">
        <id>Q08AM6</id>
        <label>VAC14</label>
    </interactant>
    <organismsDiffer>false</organismsDiffer>
    <experiments>3</experiments>
</comment>
<comment type="interaction">
    <interactant intactId="EBI-2339219">
        <id>Q08426</id>
    </interactant>
    <interactant intactId="EBI-12017160">
        <id>Q96DT7-3</id>
        <label>ZBTB10</label>
    </interactant>
    <organismsDiffer>false</organismsDiffer>
    <experiments>3</experiments>
</comment>
<comment type="interaction">
    <interactant intactId="EBI-2339219">
        <id>Q08426</id>
    </interactant>
    <interactant intactId="EBI-3918996">
        <id>Q9HCK0</id>
        <label>ZBTB26</label>
    </interactant>
    <organismsDiffer>false</organismsDiffer>
    <experiments>5</experiments>
</comment>
<comment type="interaction">
    <interactant intactId="EBI-2339219">
        <id>Q08426</id>
    </interactant>
    <interactant intactId="EBI-742740">
        <id>Q96BR9</id>
        <label>ZBTB8A</label>
    </interactant>
    <organismsDiffer>false</organismsDiffer>
    <experiments>3</experiments>
</comment>
<comment type="interaction">
    <interactant intactId="EBI-2339219">
        <id>Q08426</id>
    </interactant>
    <interactant intactId="EBI-395708">
        <id>Q96C00</id>
        <label>ZBTB9</label>
    </interactant>
    <organismsDiffer>false</organismsDiffer>
    <experiments>6</experiments>
</comment>
<comment type="interaction">
    <interactant intactId="EBI-2339219">
        <id>Q08426</id>
    </interactant>
    <interactant intactId="EBI-746345">
        <id>Q9NP64</id>
        <label>ZCCHC17</label>
    </interactant>
    <organismsDiffer>false</organismsDiffer>
    <experiments>3</experiments>
</comment>
<comment type="interaction">
    <interactant intactId="EBI-2339219">
        <id>Q08426</id>
    </interactant>
    <interactant intactId="EBI-527853">
        <id>Q9UGI0</id>
        <label>ZRANB1</label>
    </interactant>
    <organismsDiffer>false</organismsDiffer>
    <experiments>3</experiments>
</comment>
<comment type="interaction">
    <interactant intactId="EBI-2339219">
        <id>Q08426</id>
    </interactant>
    <interactant intactId="EBI-25475856">
        <id>P0DTC9</id>
        <label>N</label>
    </interactant>
    <organismsDiffer>true</organismsDiffer>
    <experiments>4</experiments>
</comment>
<comment type="subcellular location">
    <subcellularLocation>
        <location evidence="12">Peroxisome</location>
    </subcellularLocation>
</comment>
<comment type="alternative products">
    <event type="alternative splicing"/>
    <isoform>
        <id>Q08426-1</id>
        <name>1</name>
        <sequence type="displayed"/>
    </isoform>
    <isoform>
        <id>Q08426-2</id>
        <name>2</name>
        <sequence type="described" ref="VSP_042811"/>
    </isoform>
</comment>
<comment type="tissue specificity">
    <text evidence="8 9">Liver and kidney. Strongly expressed in the terminal segments of the proximal tubule. Lower amounts seen in the brain.</text>
</comment>
<comment type="PTM">
    <text evidence="7">Acetylated, leading to enhanced enzyme activity. Acetylation is enhanced by up to 80% after treatment either with trichostin A (TSA) or with nicotinamide (NAM) with highest increase on Lys-346. Acetylation and enzyme activity increased by about 1.5% on addition of fatty acids.</text>
</comment>
<comment type="disease" evidence="8">
    <disease id="DI-03997">
        <name>Fanconi renotubular syndrome 3</name>
        <acronym>FRTS3</acronym>
        <description>A form of Fanconi renotubular syndrome, a disease due to a generalized dysfunction of the proximal kidney tubule resulting in decreased solute and water reabsorption. Patients have polydipsia and polyuria with phosphaturia, glycosuria and aminoaciduria. They may develop hypophosphatemic rickets or osteomalacia, acidosis and a tendency toward dehydration. Some eventually develop renal insufficiency. FRTS3 inheritance is autosomal dominant.</description>
        <dbReference type="MIM" id="615605"/>
    </disease>
    <text>The disease is caused by variants affecting the gene represented in this entry.</text>
</comment>
<comment type="miscellaneous">
    <text>Absent in patients suffering with peroxisomal disorders such as Zellweger syndrome, neonatal adrenoleukodystrophy and infantile Refsum disease.</text>
</comment>
<comment type="similarity">
    <text evidence="12">In the N-terminal section; belongs to the enoyl-CoA hydratase/isomerase family.</text>
</comment>
<comment type="similarity">
    <text evidence="12">In the C-terminal section; belongs to the 3-hydroxyacyl-CoA dehydrogenase family.</text>
</comment>
<keyword id="KW-0007">Acetylation</keyword>
<keyword id="KW-0025">Alternative splicing</keyword>
<keyword id="KW-0225">Disease variant</keyword>
<keyword id="KW-0276">Fatty acid metabolism</keyword>
<keyword id="KW-0413">Isomerase</keyword>
<keyword id="KW-0443">Lipid metabolism</keyword>
<keyword id="KW-0456">Lyase</keyword>
<keyword id="KW-0511">Multifunctional enzyme</keyword>
<keyword id="KW-0520">NAD</keyword>
<keyword id="KW-0560">Oxidoreductase</keyword>
<keyword id="KW-0576">Peroxisome</keyword>
<keyword id="KW-0597">Phosphoprotein</keyword>
<keyword id="KW-1267">Proteomics identification</keyword>
<keyword id="KW-1185">Reference proteome</keyword>
<sequence length="723" mass="79495">MAEYTRLHNALALIRLRNPPVNAISTTLLRDIKEGLQKAVIDHTIKAIVICGAEGKFSAGADIRGFSAPRTFGLTLGHVVDEIQRNEKPVVAAIQGMAFGGGLELALGCHYRIAHAEAQVGLPEVTLGLLPGARGTQLLPRLTGVPAALDLITSGRRILADEALKLGILDKVVNSDPVEEAIRFAQRVSDQPLESRRLCNKPIQSLPNMDSIFSEALLKMRRQHPGCLAQEACVRAVQAAVQYPYEVGIKKEEELFLYLLQSGQARALQYAFFAERKANKWSTPSGASWKTASARPVSSVGVVGLGTMGRGIVISFARARIPVIAVDSDKNQLATANKMITSVLEKEASKMQQSGHPWSGPKPRLTSSVKELGGVDLVIEAVFEEMSLKKQVFAELSAVCKPEAFLCTNTSALDVDEIASSTDRPHLVIGTHFFSPAHVMKLLEVIPSQYSSPTTIATVMNLSKKIKKIGVVVGNCFGFVGNRMLNPYYNQAYFLLEEGSKPEEVDQVLEEFGFKMGPFRVSDLAGLDVGWKSRKGQGLTGPTLLPGTPARKRGNRRYCPIPDVLCELGRFGQKTGKGWYQYDKPLGRIHKPDPWLSKFLSRYRKTHHIEPRTISQDEILERCLYSLINEAFRILGEGIAASPEHIDVVYLHGYGWPRHKGGPMFYASTVGLPTVLEKLQKYYRQNPDIPQLEPSDYLKKLASQGNPPLKEWQSLAGSPSSKL</sequence>
<dbReference type="EC" id="4.2.1.17" evidence="5"/>
<dbReference type="EC" id="5.3.3.8"/>
<dbReference type="EC" id="1.1.1.35" evidence="5"/>
<dbReference type="EMBL" id="L07077">
    <property type="protein sequence ID" value="AAA53289.1"/>
    <property type="molecule type" value="mRNA"/>
</dbReference>
<dbReference type="EMBL" id="AJ427345">
    <property type="protein sequence ID" value="CAD22483.1"/>
    <property type="molecule type" value="Genomic_DNA"/>
</dbReference>
<dbReference type="EMBL" id="AJ427346">
    <property type="protein sequence ID" value="CAD22483.1"/>
    <property type="status" value="JOINED"/>
    <property type="molecule type" value="Genomic_DNA"/>
</dbReference>
<dbReference type="EMBL" id="AJ427347">
    <property type="protein sequence ID" value="CAD22483.1"/>
    <property type="status" value="JOINED"/>
    <property type="molecule type" value="Genomic_DNA"/>
</dbReference>
<dbReference type="EMBL" id="AJ427348">
    <property type="protein sequence ID" value="CAD22483.1"/>
    <property type="status" value="JOINED"/>
    <property type="molecule type" value="Genomic_DNA"/>
</dbReference>
<dbReference type="EMBL" id="AJ427349">
    <property type="protein sequence ID" value="CAD22483.1"/>
    <property type="status" value="JOINED"/>
    <property type="molecule type" value="Genomic_DNA"/>
</dbReference>
<dbReference type="EMBL" id="AJ427350">
    <property type="protein sequence ID" value="CAD22483.1"/>
    <property type="status" value="JOINED"/>
    <property type="molecule type" value="Genomic_DNA"/>
</dbReference>
<dbReference type="EMBL" id="AJ427351">
    <property type="protein sequence ID" value="CAD22483.1"/>
    <property type="status" value="JOINED"/>
    <property type="molecule type" value="Genomic_DNA"/>
</dbReference>
<dbReference type="EMBL" id="AK291798">
    <property type="protein sequence ID" value="BAF84487.1"/>
    <property type="molecule type" value="mRNA"/>
</dbReference>
<dbReference type="EMBL" id="AK223460">
    <property type="protein sequence ID" value="BAD97180.1"/>
    <property type="molecule type" value="mRNA"/>
</dbReference>
<dbReference type="EMBL" id="AK301521">
    <property type="protein sequence ID" value="BAG63025.1"/>
    <property type="molecule type" value="mRNA"/>
</dbReference>
<dbReference type="EMBL" id="AC007934">
    <property type="status" value="NOT_ANNOTATED_CDS"/>
    <property type="molecule type" value="Genomic_DNA"/>
</dbReference>
<dbReference type="EMBL" id="AC128680">
    <property type="status" value="NOT_ANNOTATED_CDS"/>
    <property type="molecule type" value="Genomic_DNA"/>
</dbReference>
<dbReference type="EMBL" id="CH471052">
    <property type="protein sequence ID" value="EAW78229.1"/>
    <property type="molecule type" value="Genomic_DNA"/>
</dbReference>
<dbReference type="EMBL" id="CH471052">
    <property type="protein sequence ID" value="EAW78230.1"/>
    <property type="molecule type" value="Genomic_DNA"/>
</dbReference>
<dbReference type="EMBL" id="BC038948">
    <property type="protein sequence ID" value="AAH38948.1"/>
    <property type="molecule type" value="mRNA"/>
</dbReference>
<dbReference type="EMBL" id="BC110460">
    <property type="protein sequence ID" value="AAI10461.1"/>
    <property type="molecule type" value="mRNA"/>
</dbReference>
<dbReference type="EMBL" id="S50245">
    <property type="protein sequence ID" value="AAB19482.1"/>
    <property type="molecule type" value="mRNA"/>
</dbReference>
<dbReference type="CCDS" id="CCDS33901.1">
    <molecule id="Q08426-1"/>
</dbReference>
<dbReference type="CCDS" id="CCDS54694.1">
    <molecule id="Q08426-2"/>
</dbReference>
<dbReference type="PIR" id="A49613">
    <property type="entry name" value="A49613"/>
</dbReference>
<dbReference type="RefSeq" id="NP_001159887.1">
    <molecule id="Q08426-2"/>
    <property type="nucleotide sequence ID" value="NM_001166415.2"/>
</dbReference>
<dbReference type="RefSeq" id="NP_001957.2">
    <molecule id="Q08426-1"/>
    <property type="nucleotide sequence ID" value="NM_001966.4"/>
</dbReference>
<dbReference type="RefSeq" id="XP_011510819.1">
    <property type="nucleotide sequence ID" value="XM_011512517.1"/>
</dbReference>
<dbReference type="SMR" id="Q08426"/>
<dbReference type="BioGRID" id="108282">
    <property type="interactions" value="154"/>
</dbReference>
<dbReference type="FunCoup" id="Q08426">
    <property type="interactions" value="923"/>
</dbReference>
<dbReference type="IntAct" id="Q08426">
    <property type="interactions" value="152"/>
</dbReference>
<dbReference type="STRING" id="9606.ENSP00000231887"/>
<dbReference type="DrugBank" id="DB00157">
    <property type="generic name" value="NADH"/>
</dbReference>
<dbReference type="SwissLipids" id="SLP:000000543"/>
<dbReference type="iPTMnet" id="Q08426"/>
<dbReference type="PhosphoSitePlus" id="Q08426"/>
<dbReference type="SwissPalm" id="Q08426"/>
<dbReference type="BioMuta" id="EHHADH"/>
<dbReference type="DMDM" id="223590229"/>
<dbReference type="jPOST" id="Q08426"/>
<dbReference type="MassIVE" id="Q08426"/>
<dbReference type="PaxDb" id="9606-ENSP00000231887"/>
<dbReference type="PeptideAtlas" id="Q08426"/>
<dbReference type="ProteomicsDB" id="58608">
    <molecule id="Q08426-1"/>
</dbReference>
<dbReference type="ProteomicsDB" id="58609">
    <molecule id="Q08426-2"/>
</dbReference>
<dbReference type="Pumba" id="Q08426"/>
<dbReference type="Antibodypedia" id="33832">
    <property type="antibodies" value="333 antibodies from 31 providers"/>
</dbReference>
<dbReference type="DNASU" id="1962"/>
<dbReference type="Ensembl" id="ENST00000231887.8">
    <molecule id="Q08426-1"/>
    <property type="protein sequence ID" value="ENSP00000231887.3"/>
    <property type="gene ID" value="ENSG00000113790.11"/>
</dbReference>
<dbReference type="Ensembl" id="ENST00000456310.5">
    <molecule id="Q08426-2"/>
    <property type="protein sequence ID" value="ENSP00000387746.1"/>
    <property type="gene ID" value="ENSG00000113790.11"/>
</dbReference>
<dbReference type="GeneID" id="1962"/>
<dbReference type="KEGG" id="hsa:1962"/>
<dbReference type="MANE-Select" id="ENST00000231887.8">
    <property type="protein sequence ID" value="ENSP00000231887.3"/>
    <property type="RefSeq nucleotide sequence ID" value="NM_001966.4"/>
    <property type="RefSeq protein sequence ID" value="NP_001957.2"/>
</dbReference>
<dbReference type="UCSC" id="uc003fpf.3">
    <molecule id="Q08426-1"/>
    <property type="organism name" value="human"/>
</dbReference>
<dbReference type="AGR" id="HGNC:3247"/>
<dbReference type="CTD" id="1962"/>
<dbReference type="DisGeNET" id="1962"/>
<dbReference type="GeneCards" id="EHHADH"/>
<dbReference type="HGNC" id="HGNC:3247">
    <property type="gene designation" value="EHHADH"/>
</dbReference>
<dbReference type="HPA" id="ENSG00000113790">
    <property type="expression patterns" value="Group enriched (kidney, liver)"/>
</dbReference>
<dbReference type="MalaCards" id="EHHADH"/>
<dbReference type="MIM" id="607037">
    <property type="type" value="gene"/>
</dbReference>
<dbReference type="MIM" id="615605">
    <property type="type" value="phenotype"/>
</dbReference>
<dbReference type="neXtProt" id="NX_Q08426"/>
<dbReference type="OpenTargets" id="ENSG00000113790"/>
<dbReference type="Orphanet" id="300">
    <property type="disease" value="Bifunctional enzyme deficiency"/>
</dbReference>
<dbReference type="Orphanet" id="3337">
    <property type="disease" value="Primary Fanconi renotubular syndrome"/>
</dbReference>
<dbReference type="PharmGKB" id="PA27682"/>
<dbReference type="VEuPathDB" id="HostDB:ENSG00000113790"/>
<dbReference type="eggNOG" id="KOG1683">
    <property type="taxonomic scope" value="Eukaryota"/>
</dbReference>
<dbReference type="GeneTree" id="ENSGT00940000157516"/>
<dbReference type="HOGENOM" id="CLU_009834_16_3_1"/>
<dbReference type="InParanoid" id="Q08426"/>
<dbReference type="OMA" id="YNGAAMG"/>
<dbReference type="OrthoDB" id="2018133at2759"/>
<dbReference type="PAN-GO" id="Q08426">
    <property type="GO annotations" value="3 GO annotations based on evolutionary models"/>
</dbReference>
<dbReference type="PhylomeDB" id="Q08426"/>
<dbReference type="TreeFam" id="TF316708"/>
<dbReference type="BioCyc" id="MetaCyc:HS03720-MONOMER"/>
<dbReference type="PathwayCommons" id="Q08426"/>
<dbReference type="Reactome" id="R-HSA-390247">
    <property type="pathway name" value="Beta-oxidation of very long chain fatty acids"/>
</dbReference>
<dbReference type="Reactome" id="R-HSA-9033241">
    <property type="pathway name" value="Peroxisomal protein import"/>
</dbReference>
<dbReference type="SABIO-RK" id="Q08426"/>
<dbReference type="SignaLink" id="Q08426"/>
<dbReference type="UniPathway" id="UPA00659"/>
<dbReference type="BioGRID-ORCS" id="1962">
    <property type="hits" value="13 hits in 1164 CRISPR screens"/>
</dbReference>
<dbReference type="ChiTaRS" id="EHHADH">
    <property type="organism name" value="human"/>
</dbReference>
<dbReference type="GenomeRNAi" id="1962"/>
<dbReference type="Pharos" id="Q08426">
    <property type="development level" value="Tbio"/>
</dbReference>
<dbReference type="PRO" id="PR:Q08426"/>
<dbReference type="Proteomes" id="UP000005640">
    <property type="component" value="Chromosome 3"/>
</dbReference>
<dbReference type="RNAct" id="Q08426">
    <property type="molecule type" value="protein"/>
</dbReference>
<dbReference type="Bgee" id="ENSG00000113790">
    <property type="expression patterns" value="Expressed in right lobe of liver and 161 other cell types or tissues"/>
</dbReference>
<dbReference type="ExpressionAtlas" id="Q08426">
    <property type="expression patterns" value="baseline and differential"/>
</dbReference>
<dbReference type="GO" id="GO:0005829">
    <property type="term" value="C:cytosol"/>
    <property type="evidence" value="ECO:0000304"/>
    <property type="project" value="Reactome"/>
</dbReference>
<dbReference type="GO" id="GO:0005782">
    <property type="term" value="C:peroxisomal matrix"/>
    <property type="evidence" value="ECO:0000304"/>
    <property type="project" value="Reactome"/>
</dbReference>
<dbReference type="GO" id="GO:0005777">
    <property type="term" value="C:peroxisome"/>
    <property type="evidence" value="ECO:0000314"/>
    <property type="project" value="UniProtKB"/>
</dbReference>
<dbReference type="GO" id="GO:0018812">
    <property type="term" value="F:3-hydroxyacyl-CoA dehydratase activity"/>
    <property type="evidence" value="ECO:0000304"/>
    <property type="project" value="Reactome"/>
</dbReference>
<dbReference type="GO" id="GO:0003857">
    <property type="term" value="F:3-hydroxyacyl-CoA dehydrogenase activity"/>
    <property type="evidence" value="ECO:0000314"/>
    <property type="project" value="UniProtKB"/>
</dbReference>
<dbReference type="GO" id="GO:0004165">
    <property type="term" value="F:delta(3)-delta(2)-enoyl-CoA isomerase activity"/>
    <property type="evidence" value="ECO:0000250"/>
    <property type="project" value="UniProtKB"/>
</dbReference>
<dbReference type="GO" id="GO:0004300">
    <property type="term" value="F:enoyl-CoA hydratase activity"/>
    <property type="evidence" value="ECO:0000314"/>
    <property type="project" value="UniProtKB"/>
</dbReference>
<dbReference type="GO" id="GO:0019899">
    <property type="term" value="F:enzyme binding"/>
    <property type="evidence" value="ECO:0000353"/>
    <property type="project" value="UniProtKB"/>
</dbReference>
<dbReference type="GO" id="GO:0016863">
    <property type="term" value="F:intramolecular oxidoreductase activity, transposing C=C bonds"/>
    <property type="evidence" value="ECO:0000250"/>
    <property type="project" value="UniProtKB"/>
</dbReference>
<dbReference type="GO" id="GO:0016509">
    <property type="term" value="F:long-chain-3-hydroxyacyl-CoA dehydrogenase activity"/>
    <property type="evidence" value="ECO:0000314"/>
    <property type="project" value="UniProtKB"/>
</dbReference>
<dbReference type="GO" id="GO:0070403">
    <property type="term" value="F:NAD+ binding"/>
    <property type="evidence" value="ECO:0007669"/>
    <property type="project" value="InterPro"/>
</dbReference>
<dbReference type="GO" id="GO:0036109">
    <property type="term" value="P:alpha-linolenic acid metabolic process"/>
    <property type="evidence" value="ECO:0007669"/>
    <property type="project" value="Ensembl"/>
</dbReference>
<dbReference type="GO" id="GO:0006635">
    <property type="term" value="P:fatty acid beta-oxidation"/>
    <property type="evidence" value="ECO:0000314"/>
    <property type="project" value="UniProtKB"/>
</dbReference>
<dbReference type="GO" id="GO:0033540">
    <property type="term" value="P:fatty acid beta-oxidation using acyl-CoA oxidase"/>
    <property type="evidence" value="ECO:0000304"/>
    <property type="project" value="Reactome"/>
</dbReference>
<dbReference type="GO" id="GO:1901570">
    <property type="term" value="P:fatty acid derivative biosynthetic process"/>
    <property type="evidence" value="ECO:0007669"/>
    <property type="project" value="Ensembl"/>
</dbReference>
<dbReference type="GO" id="GO:0042759">
    <property type="term" value="P:long-chain fatty acid biosynthetic process"/>
    <property type="evidence" value="ECO:0007669"/>
    <property type="project" value="Ensembl"/>
</dbReference>
<dbReference type="GO" id="GO:0006636">
    <property type="term" value="P:unsaturated fatty acid biosynthetic process"/>
    <property type="evidence" value="ECO:0007669"/>
    <property type="project" value="Ensembl"/>
</dbReference>
<dbReference type="CDD" id="cd06558">
    <property type="entry name" value="crotonase-like"/>
    <property type="match status" value="1"/>
</dbReference>
<dbReference type="FunFam" id="1.10.1040.50:FF:000006">
    <property type="entry name" value="Peroxisomal bifunctional enzyme"/>
    <property type="match status" value="1"/>
</dbReference>
<dbReference type="FunFam" id="3.90.226.10:FF:000052">
    <property type="entry name" value="Peroxisomal bifunctional enzyme"/>
    <property type="match status" value="1"/>
</dbReference>
<dbReference type="FunFam" id="3.40.50.720:FF:000296">
    <property type="entry name" value="peroxisomal bifunctional enzyme isoform X1"/>
    <property type="match status" value="1"/>
</dbReference>
<dbReference type="Gene3D" id="1.10.1040.50">
    <property type="match status" value="1"/>
</dbReference>
<dbReference type="Gene3D" id="3.90.226.10">
    <property type="entry name" value="2-enoyl-CoA Hydratase, Chain A, domain 1"/>
    <property type="match status" value="1"/>
</dbReference>
<dbReference type="Gene3D" id="3.40.50.720">
    <property type="entry name" value="NAD(P)-binding Rossmann-like Domain"/>
    <property type="match status" value="1"/>
</dbReference>
<dbReference type="InterPro" id="IPR006180">
    <property type="entry name" value="3-OHacyl-CoA_DH_CS"/>
</dbReference>
<dbReference type="InterPro" id="IPR006176">
    <property type="entry name" value="3-OHacyl-CoA_DH_NAD-bd"/>
</dbReference>
<dbReference type="InterPro" id="IPR006108">
    <property type="entry name" value="3HC_DH_C"/>
</dbReference>
<dbReference type="InterPro" id="IPR008927">
    <property type="entry name" value="6-PGluconate_DH-like_C_sf"/>
</dbReference>
<dbReference type="InterPro" id="IPR029045">
    <property type="entry name" value="ClpP/crotonase-like_dom_sf"/>
</dbReference>
<dbReference type="InterPro" id="IPR018376">
    <property type="entry name" value="Enoyl-CoA_hyd/isom_CS"/>
</dbReference>
<dbReference type="InterPro" id="IPR001753">
    <property type="entry name" value="Enoyl-CoA_hydra/iso"/>
</dbReference>
<dbReference type="InterPro" id="IPR036291">
    <property type="entry name" value="NAD(P)-bd_dom_sf"/>
</dbReference>
<dbReference type="PANTHER" id="PTHR23309">
    <property type="entry name" value="3-HYDROXYACYL-COA DEHYROGENASE"/>
    <property type="match status" value="1"/>
</dbReference>
<dbReference type="PANTHER" id="PTHR23309:SF49">
    <property type="entry name" value="PEROXISOMAL BIFUNCTIONAL ENZYME"/>
    <property type="match status" value="1"/>
</dbReference>
<dbReference type="Pfam" id="PF00725">
    <property type="entry name" value="3HCDH"/>
    <property type="match status" value="2"/>
</dbReference>
<dbReference type="Pfam" id="PF02737">
    <property type="entry name" value="3HCDH_N"/>
    <property type="match status" value="1"/>
</dbReference>
<dbReference type="Pfam" id="PF00378">
    <property type="entry name" value="ECH_1"/>
    <property type="match status" value="1"/>
</dbReference>
<dbReference type="SUPFAM" id="SSF48179">
    <property type="entry name" value="6-phosphogluconate dehydrogenase C-terminal domain-like"/>
    <property type="match status" value="2"/>
</dbReference>
<dbReference type="SUPFAM" id="SSF52096">
    <property type="entry name" value="ClpP/crotonase"/>
    <property type="match status" value="1"/>
</dbReference>
<dbReference type="SUPFAM" id="SSF51735">
    <property type="entry name" value="NAD(P)-binding Rossmann-fold domains"/>
    <property type="match status" value="1"/>
</dbReference>
<dbReference type="PROSITE" id="PS00067">
    <property type="entry name" value="3HCDH"/>
    <property type="match status" value="1"/>
</dbReference>
<dbReference type="PROSITE" id="PS00166">
    <property type="entry name" value="ENOYL_COA_HYDRATASE"/>
    <property type="match status" value="1"/>
</dbReference>
<protein>
    <recommendedName>
        <fullName evidence="12">Peroxisomal bifunctional enzyme</fullName>
        <shortName>PBE</shortName>
        <shortName>PBFE</shortName>
    </recommendedName>
    <alternativeName>
        <fullName evidence="11">L-bifunctional protein</fullName>
        <shortName evidence="11">LBP</shortName>
    </alternativeName>
    <alternativeName>
        <fullName>Multifunctional enzyme 1</fullName>
        <shortName>MFE1</shortName>
    </alternativeName>
    <domain>
        <recommendedName>
            <fullName>Enoyl-CoA hydratase/3,2-trans-enoyl-CoA isomerase</fullName>
            <ecNumber evidence="5">4.2.1.17</ecNumber>
            <ecNumber>5.3.3.8</ecNumber>
        </recommendedName>
    </domain>
    <domain>
        <recommendedName>
            <fullName>3-hydroxyacyl-CoA dehydrogenase</fullName>
            <ecNumber evidence="5">1.1.1.35</ecNumber>
        </recommendedName>
    </domain>
</protein>
<organism>
    <name type="scientific">Homo sapiens</name>
    <name type="common">Human</name>
    <dbReference type="NCBI Taxonomy" id="9606"/>
    <lineage>
        <taxon>Eukaryota</taxon>
        <taxon>Metazoa</taxon>
        <taxon>Chordata</taxon>
        <taxon>Craniata</taxon>
        <taxon>Vertebrata</taxon>
        <taxon>Euteleostomi</taxon>
        <taxon>Mammalia</taxon>
        <taxon>Eutheria</taxon>
        <taxon>Euarchontoglires</taxon>
        <taxon>Primates</taxon>
        <taxon>Haplorrhini</taxon>
        <taxon>Catarrhini</taxon>
        <taxon>Hominidae</taxon>
        <taxon>Homo</taxon>
    </lineage>
</organism>
<gene>
    <name evidence="14" type="primary">EHHADH</name>
    <name type="synonym">ECHD</name>
</gene>
<reference key="1">
    <citation type="journal article" date="1994" name="Genomics">
        <title>cDNA cloning of the human peroxisomal enoyl-CoA hydratase: 3-hydroxyacyl-CoA dehydrogenase bifunctional enzyme and localization to chromosome 3q26.3-3q28: a free left Alu Arm is inserted in the 3' noncoding region.</title>
        <authorList>
            <person name="Hoefler G."/>
            <person name="Forstner M."/>
            <person name="McGuinness M.C."/>
            <person name="Hulla W."/>
            <person name="Hiden M."/>
            <person name="Krisper P."/>
            <person name="Kenner L."/>
            <person name="Ried T."/>
            <person name="Lengauer C."/>
            <person name="Zechner R."/>
            <person name="Moser H.W."/>
            <person name="Chen G.L."/>
        </authorList>
    </citation>
    <scope>NUCLEOTIDE SEQUENCE [MRNA] (ISOFORM 1)</scope>
    <scope>TISSUE SPECIFICITY</scope>
    <scope>VARIANTS GLY-40; ARG-41; ILE-75; GLY-325; THR-598 AND PRO-606</scope>
    <source>
        <tissue>Liver</tissue>
    </source>
</reference>
<reference key="2">
    <citation type="submission" date="2001-09" db="EMBL/GenBank/DDBJ databases">
        <title>Structural organization of gene for human peroxisomal enoyl-CoA hydratase/L-3-hydroxyacyl-CoA dehydrogenase: L-bifunctional enzyme (L-PBE).</title>
        <authorList>
            <person name="Cherkaoui-Malki M."/>
            <person name="Surapureddi S."/>
            <person name="Yeldandi A.V."/>
            <person name="Rao S.M."/>
            <person name="Zhu Y."/>
            <person name="Reddy J.K."/>
        </authorList>
    </citation>
    <scope>NUCLEOTIDE SEQUENCE [GENOMIC DNA] (ISOFORM 1)</scope>
</reference>
<reference key="3">
    <citation type="journal article" date="2004" name="Nat. Genet.">
        <title>Complete sequencing and characterization of 21,243 full-length human cDNAs.</title>
        <authorList>
            <person name="Ota T."/>
            <person name="Suzuki Y."/>
            <person name="Nishikawa T."/>
            <person name="Otsuki T."/>
            <person name="Sugiyama T."/>
            <person name="Irie R."/>
            <person name="Wakamatsu A."/>
            <person name="Hayashi K."/>
            <person name="Sato H."/>
            <person name="Nagai K."/>
            <person name="Kimura K."/>
            <person name="Makita H."/>
            <person name="Sekine M."/>
            <person name="Obayashi M."/>
            <person name="Nishi T."/>
            <person name="Shibahara T."/>
            <person name="Tanaka T."/>
            <person name="Ishii S."/>
            <person name="Yamamoto J."/>
            <person name="Saito K."/>
            <person name="Kawai Y."/>
            <person name="Isono Y."/>
            <person name="Nakamura Y."/>
            <person name="Nagahari K."/>
            <person name="Murakami K."/>
            <person name="Yasuda T."/>
            <person name="Iwayanagi T."/>
            <person name="Wagatsuma M."/>
            <person name="Shiratori A."/>
            <person name="Sudo H."/>
            <person name="Hosoiri T."/>
            <person name="Kaku Y."/>
            <person name="Kodaira H."/>
            <person name="Kondo H."/>
            <person name="Sugawara M."/>
            <person name="Takahashi M."/>
            <person name="Kanda K."/>
            <person name="Yokoi T."/>
            <person name="Furuya T."/>
            <person name="Kikkawa E."/>
            <person name="Omura Y."/>
            <person name="Abe K."/>
            <person name="Kamihara K."/>
            <person name="Katsuta N."/>
            <person name="Sato K."/>
            <person name="Tanikawa M."/>
            <person name="Yamazaki M."/>
            <person name="Ninomiya K."/>
            <person name="Ishibashi T."/>
            <person name="Yamashita H."/>
            <person name="Murakawa K."/>
            <person name="Fujimori K."/>
            <person name="Tanai H."/>
            <person name="Kimata M."/>
            <person name="Watanabe M."/>
            <person name="Hiraoka S."/>
            <person name="Chiba Y."/>
            <person name="Ishida S."/>
            <person name="Ono Y."/>
            <person name="Takiguchi S."/>
            <person name="Watanabe S."/>
            <person name="Yosida M."/>
            <person name="Hotuta T."/>
            <person name="Kusano J."/>
            <person name="Kanehori K."/>
            <person name="Takahashi-Fujii A."/>
            <person name="Hara H."/>
            <person name="Tanase T.-O."/>
            <person name="Nomura Y."/>
            <person name="Togiya S."/>
            <person name="Komai F."/>
            <person name="Hara R."/>
            <person name="Takeuchi K."/>
            <person name="Arita M."/>
            <person name="Imose N."/>
            <person name="Musashino K."/>
            <person name="Yuuki H."/>
            <person name="Oshima A."/>
            <person name="Sasaki N."/>
            <person name="Aotsuka S."/>
            <person name="Yoshikawa Y."/>
            <person name="Matsunawa H."/>
            <person name="Ichihara T."/>
            <person name="Shiohata N."/>
            <person name="Sano S."/>
            <person name="Moriya S."/>
            <person name="Momiyama H."/>
            <person name="Satoh N."/>
            <person name="Takami S."/>
            <person name="Terashima Y."/>
            <person name="Suzuki O."/>
            <person name="Nakagawa S."/>
            <person name="Senoh A."/>
            <person name="Mizoguchi H."/>
            <person name="Goto Y."/>
            <person name="Shimizu F."/>
            <person name="Wakebe H."/>
            <person name="Hishigaki H."/>
            <person name="Watanabe T."/>
            <person name="Sugiyama A."/>
            <person name="Takemoto M."/>
            <person name="Kawakami B."/>
            <person name="Yamazaki M."/>
            <person name="Watanabe K."/>
            <person name="Kumagai A."/>
            <person name="Itakura S."/>
            <person name="Fukuzumi Y."/>
            <person name="Fujimori Y."/>
            <person name="Komiyama M."/>
            <person name="Tashiro H."/>
            <person name="Tanigami A."/>
            <person name="Fujiwara T."/>
            <person name="Ono T."/>
            <person name="Yamada K."/>
            <person name="Fujii Y."/>
            <person name="Ozaki K."/>
            <person name="Hirao M."/>
            <person name="Ohmori Y."/>
            <person name="Kawabata A."/>
            <person name="Hikiji T."/>
            <person name="Kobatake N."/>
            <person name="Inagaki H."/>
            <person name="Ikema Y."/>
            <person name="Okamoto S."/>
            <person name="Okitani R."/>
            <person name="Kawakami T."/>
            <person name="Noguchi S."/>
            <person name="Itoh T."/>
            <person name="Shigeta K."/>
            <person name="Senba T."/>
            <person name="Matsumura K."/>
            <person name="Nakajima Y."/>
            <person name="Mizuno T."/>
            <person name="Morinaga M."/>
            <person name="Sasaki M."/>
            <person name="Togashi T."/>
            <person name="Oyama M."/>
            <person name="Hata H."/>
            <person name="Watanabe M."/>
            <person name="Komatsu T."/>
            <person name="Mizushima-Sugano J."/>
            <person name="Satoh T."/>
            <person name="Shirai Y."/>
            <person name="Takahashi Y."/>
            <person name="Nakagawa K."/>
            <person name="Okumura K."/>
            <person name="Nagase T."/>
            <person name="Nomura N."/>
            <person name="Kikuchi H."/>
            <person name="Masuho Y."/>
            <person name="Yamashita R."/>
            <person name="Nakai K."/>
            <person name="Yada T."/>
            <person name="Nakamura Y."/>
            <person name="Ohara O."/>
            <person name="Isogai T."/>
            <person name="Sugano S."/>
        </authorList>
    </citation>
    <scope>NUCLEOTIDE SEQUENCE [LARGE SCALE MRNA] (ISOFORMS 1 AND 2)</scope>
    <scope>VARIANT THR-274</scope>
    <source>
        <tissue>Placenta</tissue>
        <tissue>Synovium</tissue>
    </source>
</reference>
<reference key="4">
    <citation type="submission" date="2005-04" db="EMBL/GenBank/DDBJ databases">
        <authorList>
            <person name="Totoki Y."/>
            <person name="Toyoda A."/>
            <person name="Takeda T."/>
            <person name="Sakaki Y."/>
            <person name="Tanaka A."/>
            <person name="Yokoyama S."/>
        </authorList>
    </citation>
    <scope>NUCLEOTIDE SEQUENCE [LARGE SCALE MRNA] (ISOFORM 1)</scope>
    <source>
        <tissue>Kidney</tissue>
    </source>
</reference>
<reference key="5">
    <citation type="journal article" date="2006" name="Nature">
        <title>The DNA sequence, annotation and analysis of human chromosome 3.</title>
        <authorList>
            <person name="Muzny D.M."/>
            <person name="Scherer S.E."/>
            <person name="Kaul R."/>
            <person name="Wang J."/>
            <person name="Yu J."/>
            <person name="Sudbrak R."/>
            <person name="Buhay C.J."/>
            <person name="Chen R."/>
            <person name="Cree A."/>
            <person name="Ding Y."/>
            <person name="Dugan-Rocha S."/>
            <person name="Gill R."/>
            <person name="Gunaratne P."/>
            <person name="Harris R.A."/>
            <person name="Hawes A.C."/>
            <person name="Hernandez J."/>
            <person name="Hodgson A.V."/>
            <person name="Hume J."/>
            <person name="Jackson A."/>
            <person name="Khan Z.M."/>
            <person name="Kovar-Smith C."/>
            <person name="Lewis L.R."/>
            <person name="Lozado R.J."/>
            <person name="Metzker M.L."/>
            <person name="Milosavljevic A."/>
            <person name="Miner G.R."/>
            <person name="Morgan M.B."/>
            <person name="Nazareth L.V."/>
            <person name="Scott G."/>
            <person name="Sodergren E."/>
            <person name="Song X.-Z."/>
            <person name="Steffen D."/>
            <person name="Wei S."/>
            <person name="Wheeler D.A."/>
            <person name="Wright M.W."/>
            <person name="Worley K.C."/>
            <person name="Yuan Y."/>
            <person name="Zhang Z."/>
            <person name="Adams C.Q."/>
            <person name="Ansari-Lari M.A."/>
            <person name="Ayele M."/>
            <person name="Brown M.J."/>
            <person name="Chen G."/>
            <person name="Chen Z."/>
            <person name="Clendenning J."/>
            <person name="Clerc-Blankenburg K.P."/>
            <person name="Chen R."/>
            <person name="Chen Z."/>
            <person name="Davis C."/>
            <person name="Delgado O."/>
            <person name="Dinh H.H."/>
            <person name="Dong W."/>
            <person name="Draper H."/>
            <person name="Ernst S."/>
            <person name="Fu G."/>
            <person name="Gonzalez-Garay M.L."/>
            <person name="Garcia D.K."/>
            <person name="Gillett W."/>
            <person name="Gu J."/>
            <person name="Hao B."/>
            <person name="Haugen E."/>
            <person name="Havlak P."/>
            <person name="He X."/>
            <person name="Hennig S."/>
            <person name="Hu S."/>
            <person name="Huang W."/>
            <person name="Jackson L.R."/>
            <person name="Jacob L.S."/>
            <person name="Kelly S.H."/>
            <person name="Kube M."/>
            <person name="Levy R."/>
            <person name="Li Z."/>
            <person name="Liu B."/>
            <person name="Liu J."/>
            <person name="Liu W."/>
            <person name="Lu J."/>
            <person name="Maheshwari M."/>
            <person name="Nguyen B.-V."/>
            <person name="Okwuonu G.O."/>
            <person name="Palmeiri A."/>
            <person name="Pasternak S."/>
            <person name="Perez L.M."/>
            <person name="Phelps K.A."/>
            <person name="Plopper F.J."/>
            <person name="Qiang B."/>
            <person name="Raymond C."/>
            <person name="Rodriguez R."/>
            <person name="Saenphimmachak C."/>
            <person name="Santibanez J."/>
            <person name="Shen H."/>
            <person name="Shen Y."/>
            <person name="Subramanian S."/>
            <person name="Tabor P.E."/>
            <person name="Verduzco D."/>
            <person name="Waldron L."/>
            <person name="Wang J."/>
            <person name="Wang J."/>
            <person name="Wang Q."/>
            <person name="Williams G.A."/>
            <person name="Wong G.K.-S."/>
            <person name="Yao Z."/>
            <person name="Zhang J."/>
            <person name="Zhang X."/>
            <person name="Zhao G."/>
            <person name="Zhou J."/>
            <person name="Zhou Y."/>
            <person name="Nelson D."/>
            <person name="Lehrach H."/>
            <person name="Reinhardt R."/>
            <person name="Naylor S.L."/>
            <person name="Yang H."/>
            <person name="Olson M."/>
            <person name="Weinstock G."/>
            <person name="Gibbs R.A."/>
        </authorList>
    </citation>
    <scope>NUCLEOTIDE SEQUENCE [LARGE SCALE GENOMIC DNA]</scope>
</reference>
<reference key="6">
    <citation type="submission" date="2005-09" db="EMBL/GenBank/DDBJ databases">
        <authorList>
            <person name="Mural R.J."/>
            <person name="Istrail S."/>
            <person name="Sutton G.G."/>
            <person name="Florea L."/>
            <person name="Halpern A.L."/>
            <person name="Mobarry C.M."/>
            <person name="Lippert R."/>
            <person name="Walenz B."/>
            <person name="Shatkay H."/>
            <person name="Dew I."/>
            <person name="Miller J.R."/>
            <person name="Flanigan M.J."/>
            <person name="Edwards N.J."/>
            <person name="Bolanos R."/>
            <person name="Fasulo D."/>
            <person name="Halldorsson B.V."/>
            <person name="Hannenhalli S."/>
            <person name="Turner R."/>
            <person name="Yooseph S."/>
            <person name="Lu F."/>
            <person name="Nusskern D.R."/>
            <person name="Shue B.C."/>
            <person name="Zheng X.H."/>
            <person name="Zhong F."/>
            <person name="Delcher A.L."/>
            <person name="Huson D.H."/>
            <person name="Kravitz S.A."/>
            <person name="Mouchard L."/>
            <person name="Reinert K."/>
            <person name="Remington K.A."/>
            <person name="Clark A.G."/>
            <person name="Waterman M.S."/>
            <person name="Eichler E.E."/>
            <person name="Adams M.D."/>
            <person name="Hunkapiller M.W."/>
            <person name="Myers E.W."/>
            <person name="Venter J.C."/>
        </authorList>
    </citation>
    <scope>NUCLEOTIDE SEQUENCE [LARGE SCALE GENOMIC DNA]</scope>
</reference>
<reference key="7">
    <citation type="journal article" date="2004" name="Genome Res.">
        <title>The status, quality, and expansion of the NIH full-length cDNA project: the Mammalian Gene Collection (MGC).</title>
        <authorList>
            <consortium name="The MGC Project Team"/>
        </authorList>
    </citation>
    <scope>NUCLEOTIDE SEQUENCE [LARGE SCALE MRNA] (ISOFORM 1)</scope>
    <source>
        <tissue>Uterus</tissue>
    </source>
</reference>
<reference key="8">
    <citation type="journal article" date="1991" name="Biochem. Biophys. Res. Commun.">
        <title>Import of human bifunctional enzyme into peroxisomes of human hepatoma cells in vitro.</title>
        <authorList>
            <person name="Chen G.L."/>
            <person name="Balfe A."/>
            <person name="Erwa W."/>
            <person name="Hoefler G."/>
            <person name="Gaertner J."/>
            <person name="Aikawa J."/>
            <person name="Chen W.W."/>
        </authorList>
    </citation>
    <scope>NUCLEOTIDE SEQUENCE [MRNA] OF 502-723 (ISOFORMS 1/2)</scope>
    <scope>VARIANTS THR-598 AND PRO-606</scope>
    <source>
        <tissue>Liver</tissue>
    </source>
</reference>
<reference key="9">
    <citation type="journal article" date="1987" name="Proc. Natl. Acad. Sci. U.S.A.">
        <title>Peroxisomal beta-oxidation enzyme proteins in adrenoleukodystrophy: distinction between X-linked adrenoleukodystrophy and neonatal adrenoleukodystrophy.</title>
        <authorList>
            <person name="Chen W.W."/>
            <person name="Watkins P.A."/>
            <person name="Osumi T."/>
            <person name="Hashimoto T."/>
            <person name="Moser H.W."/>
        </authorList>
    </citation>
    <scope>ASSOCIATION WITH PERIXOSOMAL DISORDERS</scope>
</reference>
<reference key="10">
    <citation type="journal article" date="2004" name="J. Lipid Res.">
        <title>Identification of the peroxisomal beta-oxidation enzymes involved in the degradation of long-chain dicarboxylic acids.</title>
        <authorList>
            <person name="Ferdinandusse S."/>
            <person name="Denis S."/>
            <person name="Van Roermund C.W."/>
            <person name="Wanders R.J."/>
            <person name="Dacremont G."/>
        </authorList>
    </citation>
    <scope>FUNCTION</scope>
    <scope>CATALYTIC ACTIVITY</scope>
    <scope>BIOPHYSICOCHEMICAL PROPERTIES</scope>
</reference>
<reference key="11">
    <citation type="journal article" date="2009" name="Science">
        <title>Lysine acetylation targets protein complexes and co-regulates major cellular functions.</title>
        <authorList>
            <person name="Choudhary C."/>
            <person name="Kumar C."/>
            <person name="Gnad F."/>
            <person name="Nielsen M.L."/>
            <person name="Rehman M."/>
            <person name="Walther T.C."/>
            <person name="Olsen J.V."/>
            <person name="Mann M."/>
        </authorList>
    </citation>
    <scope>ACETYLATION [LARGE SCALE ANALYSIS] AT LYS-584</scope>
    <scope>IDENTIFICATION BY MASS SPECTROMETRY [LARGE SCALE ANALYSIS]</scope>
</reference>
<reference key="12">
    <citation type="journal article" date="2010" name="Science">
        <title>Regulation of cellular metabolism by protein lysine acetylation.</title>
        <authorList>
            <person name="Zhao S."/>
            <person name="Xu W."/>
            <person name="Jiang W."/>
            <person name="Yu W."/>
            <person name="Lin Y."/>
            <person name="Zhang T."/>
            <person name="Yao J."/>
            <person name="Zhou L."/>
            <person name="Zeng Y."/>
            <person name="Li H."/>
            <person name="Li Y."/>
            <person name="Shi J."/>
            <person name="An W."/>
            <person name="Hancock S.M."/>
            <person name="He F."/>
            <person name="Qin L."/>
            <person name="Chin J."/>
            <person name="Yang P."/>
            <person name="Chen X."/>
            <person name="Lei Q."/>
            <person name="Xiong Y."/>
            <person name="Guan K.L."/>
        </authorList>
    </citation>
    <scope>ACETYLATION AT LYS-165; LYS-171; LYS-346 AND LYS-584</scope>
    <scope>ACTIVITY REGULATION</scope>
    <scope>IDENTIFICATION BY MASS SPECTROMETRY</scope>
    <scope>MUTAGENESIS OF LYS-165; LYS-171; LYS-346 AND LYS-584</scope>
</reference>
<reference key="13">
    <citation type="journal article" date="2011" name="BMC Syst. Biol.">
        <title>Initial characterization of the human central proteome.</title>
        <authorList>
            <person name="Burkard T.R."/>
            <person name="Planyavsky M."/>
            <person name="Kaupe I."/>
            <person name="Breitwieser F.P."/>
            <person name="Buerckstuemmer T."/>
            <person name="Bennett K.L."/>
            <person name="Superti-Furga G."/>
            <person name="Colinge J."/>
        </authorList>
    </citation>
    <scope>IDENTIFICATION BY MASS SPECTROMETRY [LARGE SCALE ANALYSIS]</scope>
</reference>
<reference key="14">
    <citation type="journal article" date="2013" name="J. Proteome Res.">
        <title>Toward a comprehensive characterization of a human cancer cell phosphoproteome.</title>
        <authorList>
            <person name="Zhou H."/>
            <person name="Di Palma S."/>
            <person name="Preisinger C."/>
            <person name="Peng M."/>
            <person name="Polat A.N."/>
            <person name="Heck A.J."/>
            <person name="Mohammed S."/>
        </authorList>
    </citation>
    <scope>PHOSPHORYLATION [LARGE SCALE ANALYSIS] AT SER-718</scope>
    <scope>IDENTIFICATION BY MASS SPECTROMETRY [LARGE SCALE ANALYSIS]</scope>
    <source>
        <tissue>Erythroleukemia</tissue>
    </source>
</reference>
<reference key="15">
    <citation type="journal article" date="2014" name="J. Proteomics">
        <title>An enzyme assisted RP-RPLC approach for in-depth analysis of human liver phosphoproteome.</title>
        <authorList>
            <person name="Bian Y."/>
            <person name="Song C."/>
            <person name="Cheng K."/>
            <person name="Dong M."/>
            <person name="Wang F."/>
            <person name="Huang J."/>
            <person name="Sun D."/>
            <person name="Wang L."/>
            <person name="Ye M."/>
            <person name="Zou H."/>
        </authorList>
    </citation>
    <scope>PHOSPHORYLATION [LARGE SCALE ANALYSIS] AT THR-548</scope>
    <scope>IDENTIFICATION BY MASS SPECTROMETRY [LARGE SCALE ANALYSIS]</scope>
    <source>
        <tissue>Liver</tissue>
    </source>
</reference>
<reference key="16">
    <citation type="journal article" date="2014" name="N. Engl. J. Med.">
        <title>Mistargeting of peroxisomal EHHADH and inherited renal Fanconi's syndrome.</title>
        <authorList>
            <person name="Klootwijk E.D."/>
            <person name="Reichold M."/>
            <person name="Helip-Wooley A."/>
            <person name="Tolaymat A."/>
            <person name="Broeker C."/>
            <person name="Robinette S.L."/>
            <person name="Reinders J."/>
            <person name="Peindl D."/>
            <person name="Renner K."/>
            <person name="Eberhart K."/>
            <person name="Assmann N."/>
            <person name="Oefner P.J."/>
            <person name="Dettmer K."/>
            <person name="Sterner C."/>
            <person name="Schroeder J."/>
            <person name="Zorger N."/>
            <person name="Witzgall R."/>
            <person name="Reinhold S.W."/>
            <person name="Stanescu H.C."/>
            <person name="Bockenhauer D."/>
            <person name="Jaureguiberry G."/>
            <person name="Courtneidge H."/>
            <person name="Hall A.M."/>
            <person name="Wijeyesekera A.D."/>
            <person name="Holmes E."/>
            <person name="Nicholson J.K."/>
            <person name="O'Brien K."/>
            <person name="Bernardini I."/>
            <person name="Krasnewich D.M."/>
            <person name="Arcos-Burgos M."/>
            <person name="Izumi Y."/>
            <person name="Nonoguchi H."/>
            <person name="Jia Y."/>
            <person name="Reddy J.K."/>
            <person name="Ilyas M."/>
            <person name="Unwin R.J."/>
            <person name="Gahl W.A."/>
            <person name="Warth R."/>
            <person name="Kleta R."/>
        </authorList>
    </citation>
    <scope>VARIANT FRTS3 LYS-3</scope>
    <scope>CHARACTERIZATION OF VARIANT FRTS3 LYS-3</scope>
    <scope>TISSUE SPECIFICITY</scope>
</reference>
<accession>Q08426</accession>
<accession>A8K6Y3</accession>
<accession>B4DWG3</accession>
<accession>D3DNU0</accession>
<accession>Q58EZ5</accession>
<proteinExistence type="evidence at protein level"/>
<evidence type="ECO:0000250" key="1"/>
<evidence type="ECO:0000250" key="2">
    <source>
        <dbReference type="UniProtKB" id="P07896"/>
    </source>
</evidence>
<evidence type="ECO:0000250" key="3">
    <source>
        <dbReference type="UniProtKB" id="Q9DBM2"/>
    </source>
</evidence>
<evidence type="ECO:0000269" key="4">
    <source>
    </source>
</evidence>
<evidence type="ECO:0000269" key="5">
    <source>
    </source>
</evidence>
<evidence type="ECO:0000269" key="6">
    <source>
    </source>
</evidence>
<evidence type="ECO:0000269" key="7">
    <source>
    </source>
</evidence>
<evidence type="ECO:0000269" key="8">
    <source>
    </source>
</evidence>
<evidence type="ECO:0000269" key="9">
    <source>
    </source>
</evidence>
<evidence type="ECO:0000303" key="10">
    <source>
    </source>
</evidence>
<evidence type="ECO:0000303" key="11">
    <source>
    </source>
</evidence>
<evidence type="ECO:0000305" key="12"/>
<evidence type="ECO:0000305" key="13">
    <source>
    </source>
</evidence>
<evidence type="ECO:0000312" key="14">
    <source>
        <dbReference type="HGNC" id="HGNC:3247"/>
    </source>
</evidence>
<evidence type="ECO:0007744" key="15">
    <source>
    </source>
</evidence>
<evidence type="ECO:0007744" key="16">
    <source>
    </source>
</evidence>
<evidence type="ECO:0007744" key="17">
    <source>
    </source>
</evidence>